<feature type="signal peptide" evidence="9">
    <location>
        <begin position="1"/>
        <end position="19"/>
    </location>
</feature>
<feature type="chain" id="PRO_0000027592" description="Mannan-binding lectin serine protease 1">
    <location>
        <begin position="20"/>
        <end position="699"/>
    </location>
</feature>
<feature type="chain" id="PRO_0000027593" description="Mannan-binding lectin serine protease 1 heavy chain">
    <location>
        <begin position="20"/>
        <end position="448"/>
    </location>
</feature>
<feature type="chain" id="PRO_0000027594" description="Mannan-binding lectin serine protease 1 light chain">
    <location>
        <begin position="449"/>
        <end position="699"/>
    </location>
</feature>
<feature type="domain" description="CUB 1" evidence="3">
    <location>
        <begin position="20"/>
        <end position="138"/>
    </location>
</feature>
<feature type="domain" description="EGF-like; calcium-binding">
    <location>
        <begin position="139"/>
        <end position="182"/>
    </location>
</feature>
<feature type="domain" description="CUB 2" evidence="3">
    <location>
        <begin position="185"/>
        <end position="297"/>
    </location>
</feature>
<feature type="domain" description="Sushi 1" evidence="5">
    <location>
        <begin position="299"/>
        <end position="364"/>
    </location>
</feature>
<feature type="domain" description="Sushi 2" evidence="5">
    <location>
        <begin position="365"/>
        <end position="434"/>
    </location>
</feature>
<feature type="domain" description="Peptidase S1" evidence="4">
    <location>
        <begin position="449"/>
        <end position="696"/>
    </location>
</feature>
<feature type="region of interest" description="Interaction with FCN2">
    <location>
        <begin position="20"/>
        <end position="278"/>
    </location>
</feature>
<feature type="region of interest" description="Homodimerization" evidence="1">
    <location>
        <begin position="20"/>
        <end position="184"/>
    </location>
</feature>
<feature type="region of interest" description="Interaction with MBL2">
    <location>
        <begin position="20"/>
        <end position="184"/>
    </location>
</feature>
<feature type="active site" description="Charge relay system" evidence="1">
    <location>
        <position position="490"/>
    </location>
</feature>
<feature type="active site" description="Charge relay system" evidence="1">
    <location>
        <position position="552"/>
    </location>
</feature>
<feature type="active site" description="Charge relay system" evidence="1">
    <location>
        <position position="646"/>
    </location>
</feature>
<feature type="binding site">
    <location>
        <position position="68"/>
    </location>
    <ligand>
        <name>Ca(2+)</name>
        <dbReference type="ChEBI" id="CHEBI:29108"/>
        <label>1</label>
    </ligand>
</feature>
<feature type="binding site">
    <location>
        <position position="76"/>
    </location>
    <ligand>
        <name>Ca(2+)</name>
        <dbReference type="ChEBI" id="CHEBI:29108"/>
        <label>1</label>
    </ligand>
</feature>
<feature type="binding site">
    <location>
        <position position="121"/>
    </location>
    <ligand>
        <name>Ca(2+)</name>
        <dbReference type="ChEBI" id="CHEBI:29108"/>
        <label>1</label>
    </ligand>
</feature>
<feature type="binding site">
    <location>
        <position position="123"/>
    </location>
    <ligand>
        <name>Ca(2+)</name>
        <dbReference type="ChEBI" id="CHEBI:29108"/>
        <label>1</label>
    </ligand>
</feature>
<feature type="binding site">
    <location>
        <position position="139"/>
    </location>
    <ligand>
        <name>Ca(2+)</name>
        <dbReference type="ChEBI" id="CHEBI:29108"/>
        <label>2</label>
    </ligand>
</feature>
<feature type="binding site">
    <location>
        <position position="140"/>
    </location>
    <ligand>
        <name>Ca(2+)</name>
        <dbReference type="ChEBI" id="CHEBI:29108"/>
        <label>2</label>
    </ligand>
</feature>
<feature type="binding site">
    <location>
        <position position="142"/>
    </location>
    <ligand>
        <name>Ca(2+)</name>
        <dbReference type="ChEBI" id="CHEBI:29108"/>
        <label>2</label>
    </ligand>
</feature>
<feature type="binding site">
    <location>
        <position position="159"/>
    </location>
    <ligand>
        <name>Ca(2+)</name>
        <dbReference type="ChEBI" id="CHEBI:29108"/>
        <label>2</label>
    </ligand>
</feature>
<feature type="binding site">
    <location>
        <position position="160"/>
    </location>
    <ligand>
        <name>Ca(2+)</name>
        <dbReference type="ChEBI" id="CHEBI:29108"/>
        <label>2</label>
    </ligand>
</feature>
<feature type="binding site">
    <location>
        <position position="163"/>
    </location>
    <ligand>
        <name>Ca(2+)</name>
        <dbReference type="ChEBI" id="CHEBI:29108"/>
        <label>2</label>
    </ligand>
</feature>
<feature type="binding site">
    <location>
        <position position="235"/>
    </location>
    <ligand>
        <name>Ca(2+)</name>
        <dbReference type="ChEBI" id="CHEBI:29108"/>
        <label>3</label>
    </ligand>
</feature>
<feature type="binding site">
    <location>
        <position position="245"/>
    </location>
    <ligand>
        <name>Ca(2+)</name>
        <dbReference type="ChEBI" id="CHEBI:29108"/>
        <label>3</label>
    </ligand>
</feature>
<feature type="binding site">
    <location>
        <position position="282"/>
    </location>
    <ligand>
        <name>Ca(2+)</name>
        <dbReference type="ChEBI" id="CHEBI:29108"/>
        <label>3</label>
    </ligand>
</feature>
<feature type="binding site">
    <location>
        <position position="284"/>
    </location>
    <ligand>
        <name>Ca(2+)</name>
        <dbReference type="ChEBI" id="CHEBI:29108"/>
        <label>3</label>
    </ligand>
</feature>
<feature type="site" description="Cleavage; by autolysis" evidence="9">
    <location>
        <begin position="448"/>
        <end position="449"/>
    </location>
</feature>
<feature type="modified residue" description="(3R)-3-hydroxyasparagine" evidence="2">
    <location>
        <position position="159"/>
    </location>
</feature>
<feature type="glycosylation site" description="N-linked (GlcNAc...) asparagine" evidence="9 16">
    <location>
        <position position="49"/>
    </location>
</feature>
<feature type="glycosylation site" description="N-linked (GlcNAc...) (complex) asparagine" evidence="16 17 18">
    <location>
        <position position="178"/>
    </location>
</feature>
<feature type="glycosylation site" description="N-linked (GlcNAc...) (complex) asparagine" evidence="16 18">
    <location>
        <position position="385"/>
    </location>
</feature>
<feature type="glycosylation site" description="N-linked (GlcNAc...) asparagine" evidence="9 16">
    <location>
        <position position="407"/>
    </location>
</feature>
<feature type="disulfide bond" evidence="17">
    <location>
        <begin position="73"/>
        <end position="91"/>
    </location>
</feature>
<feature type="disulfide bond" evidence="17">
    <location>
        <begin position="143"/>
        <end position="157"/>
    </location>
</feature>
<feature type="disulfide bond" evidence="17">
    <location>
        <begin position="153"/>
        <end position="166"/>
    </location>
</feature>
<feature type="disulfide bond" evidence="17">
    <location>
        <begin position="168"/>
        <end position="181"/>
    </location>
</feature>
<feature type="disulfide bond" evidence="17">
    <location>
        <begin position="185"/>
        <end position="212"/>
    </location>
</feature>
<feature type="disulfide bond" evidence="17">
    <location>
        <begin position="242"/>
        <end position="260"/>
    </location>
</feature>
<feature type="disulfide bond" evidence="1">
    <location>
        <begin position="301"/>
        <end position="349"/>
    </location>
</feature>
<feature type="disulfide bond" evidence="1">
    <location>
        <begin position="329"/>
        <end position="362"/>
    </location>
</feature>
<feature type="disulfide bond" evidence="1">
    <location>
        <begin position="367"/>
        <end position="414"/>
    </location>
</feature>
<feature type="disulfide bond" evidence="1">
    <location>
        <begin position="397"/>
        <end position="432"/>
    </location>
</feature>
<feature type="disulfide bond" description="Interchain (between heavy and light chains)" evidence="3 4 5">
    <location>
        <begin position="436"/>
        <end position="572"/>
    </location>
</feature>
<feature type="disulfide bond" evidence="1">
    <location>
        <begin position="475"/>
        <end position="491"/>
    </location>
</feature>
<feature type="disulfide bond" evidence="1">
    <location>
        <begin position="614"/>
        <end position="631"/>
    </location>
</feature>
<feature type="disulfide bond" evidence="1">
    <location>
        <begin position="642"/>
        <end position="672"/>
    </location>
</feature>
<feature type="splice variant" id="VSP_036809" description="In isoform 4." evidence="28">
    <location>
        <begin position="1"/>
        <end position="113"/>
    </location>
</feature>
<feature type="splice variant" id="VSP_036810" description="In isoform 3." evidence="29 30">
    <original>IVDCRAPGELEHGLITF</original>
    <variation>KNEIDLESELKSEQVTE</variation>
    <location>
        <begin position="364"/>
        <end position="380"/>
    </location>
</feature>
<feature type="splice variant" id="VSP_036811" description="In isoform 3." evidence="29 30">
    <location>
        <begin position="381"/>
        <end position="699"/>
    </location>
</feature>
<feature type="splice variant" id="VSP_036812" description="In isoform 2 and isoform 4." evidence="27 28 29">
    <original>V</original>
    <variation>ECGQPSRSLPSLVKRIIGGRNAEPGLFPWQALIVVEDTSRVPNDKWFGSGALLSASWILTAAHVLRSQRRDTTVIPVSKEHVTVYLGLHDVRDKSGAVNSSAARVVLHPDFNIQNYNHDIALVQLQEPVPLGPHVMPVCLPRLEPEGPAPHMLGLVAGWGISNPNVTVDEIISSGTRTLSDVLQYVKLPVVPHAECKTSYESRSGNYSVTENMFCAGYYEGGKDTCLGDSGGAFVIFDDLSQRWVVQGLVSWGGPEECGSKQVYGVYTKVSNYVDWVWEQMGLPQSVVEPQVER</variation>
    <location>
        <position position="435"/>
    </location>
</feature>
<feature type="splice variant" id="VSP_036813" description="In isoform 2 and isoform 4." evidence="27 28 29">
    <location>
        <begin position="436"/>
        <end position="699"/>
    </location>
</feature>
<feature type="sequence variant" id="VAR_078814" description="In 3MC1." evidence="22">
    <location>
        <begin position="3"/>
        <end position="699"/>
    </location>
</feature>
<feature type="sequence variant" id="VAR_051831" description="In dbSNP:rs1062049.">
    <original>T</original>
    <variation>I</variation>
    <location>
        <position position="21"/>
    </location>
</feature>
<feature type="sequence variant" id="VAR_051832" description="In dbSNP:rs13322090.">
    <original>V</original>
    <variation>A</variation>
    <location>
        <position position="568"/>
    </location>
</feature>
<feature type="sequence variant" id="VAR_051833" description="In dbSNP:rs3774266.">
    <original>G</original>
    <variation>R</variation>
    <location>
        <position position="679"/>
    </location>
</feature>
<feature type="mutagenesis site" description="Partial loss of interaction with FCN2, FCN3 and MBL2." evidence="17">
    <original>E</original>
    <variation>A</variation>
    <variation>Q</variation>
    <location>
        <position position="68"/>
    </location>
</feature>
<feature type="mutagenesis site" description="Partial loss of interaction with FCN2, FCN3 and MBL2." evidence="17">
    <original>Y</original>
    <variation>A</variation>
    <location>
        <position position="77"/>
    </location>
</feature>
<feature type="mutagenesis site" description="Partial loss of interaction with FCN2, FCN3 and MBL2." evidence="17">
    <original>E</original>
    <variation>A</variation>
    <location>
        <position position="99"/>
    </location>
</feature>
<feature type="mutagenesis site" description="Loss of interaction with FNC2 and FCN3 and partial loss of interaction with MBL2." evidence="17">
    <original>D</original>
    <variation>A</variation>
    <variation>N</variation>
    <location>
        <position position="121"/>
    </location>
</feature>
<feature type="mutagenesis site" description="Partial loss of interaction with FCN2, FCN3 and MBL2." evidence="17">
    <original>F</original>
    <variation>A</variation>
    <location>
        <position position="122"/>
    </location>
</feature>
<feature type="mutagenesis site" description="Partial loss of interaction with FCN2, FCN3 and MBL2." evidence="17">
    <original>S</original>
    <variation>A</variation>
    <location>
        <position position="123"/>
    </location>
</feature>
<feature type="mutagenesis site" description="Partial loss of interaction with FCN2, FCN3 and MBL2." evidence="17">
    <original>E</original>
    <variation>A</variation>
    <location>
        <position position="125"/>
    </location>
</feature>
<feature type="mutagenesis site" description="Loss of interaction with FCN2, FCN3 and MBL2." evidence="17">
    <original>H</original>
    <variation>A</variation>
    <location>
        <position position="237"/>
    </location>
</feature>
<feature type="mutagenesis site" description="Partial loss of interaction with FCN2, FCN3 and MBL2." evidence="17">
    <original>E</original>
    <variation>A</variation>
    <location>
        <position position="239"/>
    </location>
</feature>
<feature type="mutagenesis site" description="Loss of interaction with FCN2, FCN3 and MBL2." evidence="17">
    <original>Y</original>
    <variation>A</variation>
    <location>
        <position position="244"/>
    </location>
</feature>
<feature type="mutagenesis site" description="Partial loss of interaction with FCN2, FCN3 and MBL2." evidence="17">
    <original>E</original>
    <variation>A</variation>
    <location>
        <position position="262"/>
    </location>
</feature>
<feature type="mutagenesis site" description="Partial loss of interaction with FCN2 and FCN3. No effect on interaction with MBL2." evidence="17">
    <original>S</original>
    <variation>A</variation>
    <location>
        <position position="274"/>
    </location>
</feature>
<feature type="mutagenesis site" description="Partial loss of interaction with FCN2, FCN3 and MBL2." evidence="17">
    <original>N</original>
    <variation>A</variation>
    <location>
        <position position="283"/>
    </location>
</feature>
<feature type="mutagenesis site" description="Partial loss of interaction with FCN2, FCN3 and MBL2." evidence="17">
    <original>E</original>
    <variation>A</variation>
    <location>
        <position position="286"/>
    </location>
</feature>
<feature type="mutagenesis site" description="No autoproteolytic processing." evidence="15">
    <original>S</original>
    <variation>A</variation>
    <location>
        <position position="646"/>
    </location>
</feature>
<feature type="sequence conflict" description="In Ref. 6; BAF84375." evidence="31" ref="6">
    <original>R</original>
    <variation>K</variation>
    <location>
        <position position="2"/>
    </location>
</feature>
<feature type="sequence conflict" description="In Ref. 7; CAH18409." evidence="31" ref="7">
    <original>T</original>
    <variation>A</variation>
    <location>
        <position position="89"/>
    </location>
</feature>
<feature type="sequence conflict" description="In Ref. 6; BAF84375." evidence="31" ref="6">
    <original>F</original>
    <variation>L</variation>
    <location>
        <position position="232"/>
    </location>
</feature>
<feature type="sequence conflict" description="In Ref. 2; BAA05928 and 3; BAA34864." evidence="31" ref="2 3">
    <original>E</original>
    <variation>Q</variation>
    <location>
        <position position="235"/>
    </location>
</feature>
<feature type="sequence conflict" description="In Ref. 2; BAA05928, 3; BAA34864 and 4; BAA89206." evidence="31" ref="2 3 4">
    <original>G</original>
    <variation>A</variation>
    <location>
        <position position="285"/>
    </location>
</feature>
<feature type="sequence conflict" description="In Ref. 6; BAF83846." evidence="31" ref="6">
    <original>E</original>
    <variation>G</variation>
    <location>
        <position position="392"/>
    </location>
</feature>
<feature type="sequence conflict" description="In Ref. 2; BAA05928." evidence="31" ref="2">
    <original>E</original>
    <variation>G</variation>
    <location>
        <position position="499"/>
    </location>
</feature>
<feature type="sequence conflict" description="In Ref. 1; BAA04477 and 4; BAA89206." evidence="31" ref="1 4">
    <original>E</original>
    <variation>K</variation>
    <location>
        <position position="499"/>
    </location>
</feature>
<feature type="sequence conflict" description="In Ref. 3; BAA34864." evidence="31" ref="3">
    <original>D</original>
    <variation>A</variation>
    <location>
        <position position="527"/>
    </location>
</feature>
<feature type="sequence conflict" description="In Ref. 1; BAA04477." evidence="31" ref="1">
    <original>Q</original>
    <variation>K</variation>
    <location>
        <position position="543"/>
    </location>
</feature>
<feature type="sequence conflict" description="In Ref. 3; BAA34864." evidence="31" ref="3">
    <original>D</original>
    <variation>V</variation>
    <location>
        <position position="552"/>
    </location>
</feature>
<feature type="sequence conflict" description="In Ref. 1; BAA04477." evidence="31" ref="1">
    <original>A</original>
    <variation>S</variation>
    <location>
        <position position="643"/>
    </location>
</feature>
<feature type="strand" evidence="32">
    <location>
        <begin position="28"/>
        <end position="32"/>
    </location>
</feature>
<feature type="turn" evidence="32">
    <location>
        <begin position="34"/>
        <end position="37"/>
    </location>
</feature>
<feature type="strand" evidence="32">
    <location>
        <begin position="42"/>
        <end position="51"/>
    </location>
</feature>
<feature type="strand" evidence="32">
    <location>
        <begin position="56"/>
        <end position="66"/>
    </location>
</feature>
<feature type="helix" evidence="32">
    <location>
        <begin position="71"/>
        <end position="73"/>
    </location>
</feature>
<feature type="strand" evidence="32">
    <location>
        <begin position="75"/>
        <end position="81"/>
    </location>
</feature>
<feature type="strand" evidence="32">
    <location>
        <begin position="86"/>
        <end position="90"/>
    </location>
</feature>
<feature type="strand" evidence="32">
    <location>
        <begin position="92"/>
        <end position="99"/>
    </location>
</feature>
<feature type="strand" evidence="32">
    <location>
        <begin position="110"/>
        <end position="120"/>
    </location>
</feature>
<feature type="strand" evidence="32">
    <location>
        <begin position="130"/>
        <end position="139"/>
    </location>
</feature>
<feature type="turn" evidence="32">
    <location>
        <begin position="142"/>
        <end position="144"/>
    </location>
</feature>
<feature type="strand" evidence="32">
    <location>
        <begin position="154"/>
        <end position="160"/>
    </location>
</feature>
<feature type="strand" evidence="32">
    <location>
        <begin position="163"/>
        <end position="167"/>
    </location>
</feature>
<feature type="strand" evidence="32">
    <location>
        <begin position="192"/>
        <end position="199"/>
    </location>
</feature>
<feature type="turn" evidence="32">
    <location>
        <begin position="200"/>
        <end position="203"/>
    </location>
</feature>
<feature type="strand" evidence="32">
    <location>
        <begin position="211"/>
        <end position="217"/>
    </location>
</feature>
<feature type="strand" evidence="32">
    <location>
        <begin position="223"/>
        <end position="228"/>
    </location>
</feature>
<feature type="strand" evidence="32">
    <location>
        <begin position="238"/>
        <end position="244"/>
    </location>
</feature>
<feature type="strand" evidence="32">
    <location>
        <begin position="246"/>
        <end position="251"/>
    </location>
</feature>
<feature type="strand" evidence="32">
    <location>
        <begin position="254"/>
        <end position="259"/>
    </location>
</feature>
<feature type="strand" evidence="32">
    <location>
        <begin position="261"/>
        <end position="263"/>
    </location>
</feature>
<feature type="strand" evidence="32">
    <location>
        <begin position="273"/>
        <end position="280"/>
    </location>
</feature>
<feature type="strand" evidence="32">
    <location>
        <begin position="291"/>
        <end position="297"/>
    </location>
</feature>
<feature type="strand" evidence="35">
    <location>
        <begin position="310"/>
        <end position="314"/>
    </location>
</feature>
<feature type="strand" evidence="35">
    <location>
        <begin position="317"/>
        <end position="320"/>
    </location>
</feature>
<feature type="strand" evidence="35">
    <location>
        <begin position="324"/>
        <end position="329"/>
    </location>
</feature>
<feature type="strand" evidence="35">
    <location>
        <begin position="333"/>
        <end position="337"/>
    </location>
</feature>
<feature type="strand" evidence="35">
    <location>
        <begin position="340"/>
        <end position="349"/>
    </location>
</feature>
<feature type="strand" evidence="35">
    <location>
        <begin position="355"/>
        <end position="357"/>
    </location>
</feature>
<feature type="strand" evidence="35">
    <location>
        <begin position="361"/>
        <end position="364"/>
    </location>
</feature>
<feature type="strand" evidence="35">
    <location>
        <begin position="376"/>
        <end position="382"/>
    </location>
</feature>
<feature type="strand" evidence="35">
    <location>
        <begin position="392"/>
        <end position="397"/>
    </location>
</feature>
<feature type="turn" evidence="35">
    <location>
        <begin position="399"/>
        <end position="401"/>
    </location>
</feature>
<feature type="strand" evidence="35">
    <location>
        <begin position="402"/>
        <end position="404"/>
    </location>
</feature>
<feature type="helix" evidence="35">
    <location>
        <begin position="405"/>
        <end position="407"/>
    </location>
</feature>
<feature type="strand" evidence="35">
    <location>
        <begin position="411"/>
        <end position="414"/>
    </location>
</feature>
<feature type="turn" evidence="34">
    <location>
        <begin position="416"/>
        <end position="418"/>
    </location>
</feature>
<feature type="strand" evidence="35">
    <location>
        <begin position="420"/>
        <end position="422"/>
    </location>
</feature>
<feature type="turn" evidence="35">
    <location>
        <begin position="423"/>
        <end position="425"/>
    </location>
</feature>
<feature type="strand" evidence="34">
    <location>
        <begin position="426"/>
        <end position="428"/>
    </location>
</feature>
<feature type="strand" evidence="35">
    <location>
        <begin position="432"/>
        <end position="434"/>
    </location>
</feature>
<feature type="strand" evidence="35">
    <location>
        <begin position="463"/>
        <end position="468"/>
    </location>
</feature>
<feature type="strand" evidence="35">
    <location>
        <begin position="473"/>
        <end position="480"/>
    </location>
</feature>
<feature type="turn" evidence="35">
    <location>
        <begin position="481"/>
        <end position="483"/>
    </location>
</feature>
<feature type="strand" evidence="35">
    <location>
        <begin position="484"/>
        <end position="487"/>
    </location>
</feature>
<feature type="helix" evidence="35">
    <location>
        <begin position="489"/>
        <end position="491"/>
    </location>
</feature>
<feature type="turn" evidence="35">
    <location>
        <begin position="505"/>
        <end position="507"/>
    </location>
</feature>
<feature type="turn" evidence="35">
    <location>
        <begin position="511"/>
        <end position="513"/>
    </location>
</feature>
<feature type="strand" evidence="35">
    <location>
        <begin position="514"/>
        <end position="519"/>
    </location>
</feature>
<feature type="strand" evidence="35">
    <location>
        <begin position="522"/>
        <end position="525"/>
    </location>
</feature>
<feature type="strand" evidence="35">
    <location>
        <begin position="531"/>
        <end position="540"/>
    </location>
</feature>
<feature type="turn" evidence="35">
    <location>
        <begin position="546"/>
        <end position="549"/>
    </location>
</feature>
<feature type="strand" evidence="35">
    <location>
        <begin position="554"/>
        <end position="560"/>
    </location>
</feature>
<feature type="strand" evidence="33">
    <location>
        <begin position="565"/>
        <end position="567"/>
    </location>
</feature>
<feature type="strand" evidence="35">
    <location>
        <begin position="583"/>
        <end position="591"/>
    </location>
</feature>
<feature type="strand" evidence="35">
    <location>
        <begin position="594"/>
        <end position="596"/>
    </location>
</feature>
<feature type="strand" evidence="35">
    <location>
        <begin position="602"/>
        <end position="609"/>
    </location>
</feature>
<feature type="helix" evidence="35">
    <location>
        <begin position="611"/>
        <end position="618"/>
    </location>
</feature>
<feature type="helix" evidence="35">
    <location>
        <begin position="619"/>
        <end position="621"/>
    </location>
</feature>
<feature type="strand" evidence="35">
    <location>
        <begin position="629"/>
        <end position="632"/>
    </location>
</feature>
<feature type="strand" evidence="35">
    <location>
        <begin position="649"/>
        <end position="654"/>
    </location>
</feature>
<feature type="turn" evidence="35">
    <location>
        <begin position="655"/>
        <end position="658"/>
    </location>
</feature>
<feature type="strand" evidence="35">
    <location>
        <begin position="659"/>
        <end position="666"/>
    </location>
</feature>
<feature type="helix" evidence="35">
    <location>
        <begin position="672"/>
        <end position="675"/>
    </location>
</feature>
<feature type="strand" evidence="35">
    <location>
        <begin position="677"/>
        <end position="683"/>
    </location>
</feature>
<feature type="helix" evidence="35">
    <location>
        <begin position="684"/>
        <end position="687"/>
    </location>
</feature>
<feature type="helix" evidence="35">
    <location>
        <begin position="688"/>
        <end position="695"/>
    </location>
</feature>
<feature type="glycosylation site" description="N-linked (GlcNAc) asparagine" evidence="16">
    <location sequence="P48740-2">
        <position position="533"/>
    </location>
</feature>
<feature type="glycosylation site" description="N-linked (GlcNAc) asparagine" evidence="16">
    <location sequence="P48740-2">
        <position position="599"/>
    </location>
</feature>
<feature type="sequence variant" id="VAR_082900" description="In 3MC1; dbSNP:rs759368047." evidence="21">
    <original>G</original>
    <variation>E</variation>
    <location sequence="P48740-2">
        <position position="484"/>
    </location>
</feature>
<feature type="sequence variant" id="VAR_082901" description="In 3MC1; dbSNP:rs387906752." evidence="20">
    <original>H</original>
    <variation>Y</variation>
    <location sequence="P48740-2">
        <position position="497"/>
    </location>
</feature>
<feature type="sequence variant" id="VAR_082902" description="In 3MC1; dbSNP:rs779329363." evidence="21">
    <original>D</original>
    <variation>N</variation>
    <location sequence="P48740-2">
        <position position="553"/>
    </location>
</feature>
<feature type="sequence variant" id="VAR_082903" description="In 3MC1; dbSNP:rs387906753." evidence="20">
    <original>C</original>
    <variation>R</variation>
    <location sequence="P48740-2">
        <position position="630"/>
    </location>
</feature>
<feature type="sequence variant" id="VAR_082904" description="In 3MC1." evidence="21">
    <original>D</original>
    <variation>Y</variation>
    <location sequence="P48740-2">
        <position position="663"/>
    </location>
</feature>
<feature type="sequence variant" id="VAR_082905" description="In 3MC1; dbSNP:rs387906754." evidence="20">
    <original>G</original>
    <variation>E</variation>
    <location sequence="P48740-2">
        <position position="666"/>
    </location>
</feature>
<comment type="function">
    <text evidence="10 20">Functions in the lectin pathway of complement, which performs a key role in innate immunity by recognizing pathogens through patterns of sugar moieties and neutralizing them. The lectin pathway is triggered upon binding of mannan-binding lectin (MBL) and ficolins to sugar moieties which leads to activation of the associated proteases MASP1 and MASP2. Functions as an endopeptidase and may activate MASP2 or C2 or directly activate C3 the key component of complement reaction. Isoform 2 may have an inhibitory effect on the activation of the lectin pathway of complement or may cleave IGFBP5. Also plays a role in development (PubMed:21258343).</text>
</comment>
<comment type="activity regulation">
    <text evidence="11 14">Inhibited by SERPING1 and A2M.</text>
</comment>
<comment type="biophysicochemical properties">
    <kinetics>
        <KM evidence="11 14">0.1 mM for Ac-Gly-Lys-OMe (at 30 degrees Celsius)</KM>
        <KM evidence="11 14">310 uM for Bz-Arg-OEt (at 30 degrees Celsius)</KM>
        <KM evidence="11 14">4.8 uM for C2 (at 37 degrees Celsius)</KM>
    </kinetics>
</comment>
<comment type="subunit">
    <text evidence="6 7 8 9 12 13 17 19 25">Homodimer. Interacts with the oligomeric lectins MBL2, FCN2 and FCN3; triggers the lectin pathway of complement through activation of C3. Interacts with SERPING1. Interacts with COLEC11; probably triggers the lectin pathway of complement (PubMed:20956340).</text>
</comment>
<comment type="interaction">
    <interactant intactId="EBI-6380536">
        <id>P48740</id>
    </interactant>
    <interactant intactId="EBI-25809731">
        <id>Q9BWP8</id>
        <label>COLEC11</label>
    </interactant>
    <organismsDiffer>false</organismsDiffer>
    <experiments>2</experiments>
</comment>
<comment type="interaction">
    <interactant intactId="EBI-6380536">
        <id>P48740</id>
    </interactant>
    <interactant intactId="EBI-5325353">
        <id>P11226</id>
        <label>MBL2</label>
    </interactant>
    <organismsDiffer>false</organismsDiffer>
    <experiments>3</experiments>
</comment>
<comment type="interaction">
    <interactant intactId="EBI-16138717">
        <id>P48740-1</id>
    </interactant>
    <interactant intactId="EBI-25809731">
        <id>Q9BWP8</id>
        <label>COLEC11</label>
    </interactant>
    <organismsDiffer>false</organismsDiffer>
    <experiments>2</experiments>
</comment>
<comment type="interaction">
    <interactant intactId="EBI-16138717">
        <id>P48740-1</id>
    </interactant>
    <interactant intactId="EBI-26357096">
        <id>O00187-1</id>
        <label>MASP2</label>
    </interactant>
    <organismsDiffer>false</organismsDiffer>
    <experiments>8</experiments>
</comment>
<comment type="interaction">
    <interactant intactId="EBI-16138717">
        <id>P48740-1</id>
    </interactant>
    <interactant intactId="EBI-5325353">
        <id>P11226</id>
        <label>MBL2</label>
    </interactant>
    <organismsDiffer>false</organismsDiffer>
    <experiments>9</experiments>
</comment>
<comment type="interaction">
    <interactant intactId="EBI-26435098">
        <id>P48740-2</id>
    </interactant>
    <interactant intactId="EBI-25809731">
        <id>Q9BWP8</id>
        <label>COLEC11</label>
    </interactant>
    <organismsDiffer>false</organismsDiffer>
    <experiments>3</experiments>
</comment>
<comment type="interaction">
    <interactant intactId="EBI-26435098">
        <id>P48740-2</id>
    </interactant>
    <interactant intactId="EBI-7468784">
        <id>Q15485</id>
        <label>FCN2</label>
    </interactant>
    <organismsDiffer>false</organismsDiffer>
    <experiments>2</experiments>
</comment>
<comment type="interaction">
    <interactant intactId="EBI-26435098">
        <id>P48740-2</id>
    </interactant>
    <interactant intactId="EBI-11786958">
        <id>O75636</id>
        <label>FCN3</label>
    </interactant>
    <organismsDiffer>false</organismsDiffer>
    <experiments>5</experiments>
</comment>
<comment type="interaction">
    <interactant intactId="EBI-26435098">
        <id>P48740-2</id>
    </interactant>
    <interactant intactId="EBI-26357096">
        <id>O00187-1</id>
        <label>MASP2</label>
    </interactant>
    <organismsDiffer>false</organismsDiffer>
    <experiments>4</experiments>
</comment>
<comment type="interaction">
    <interactant intactId="EBI-26435098">
        <id>P48740-2</id>
    </interactant>
    <interactant intactId="EBI-5325353">
        <id>P11226</id>
        <label>MBL2</label>
    </interactant>
    <organismsDiffer>false</organismsDiffer>
    <experiments>12</experiments>
</comment>
<comment type="interaction">
    <interactant intactId="EBI-26435098">
        <id>P48740-2</id>
    </interactant>
    <interactant intactId="EBI-1029159">
        <id>P23827</id>
        <label>eco</label>
    </interactant>
    <organismsDiffer>true</organismsDiffer>
    <experiments>3</experiments>
</comment>
<comment type="interaction">
    <interactant intactId="EBI-26435118">
        <id>P48740-3</id>
    </interactant>
    <interactant intactId="EBI-11786958">
        <id>O75636</id>
        <label>FCN3</label>
    </interactant>
    <organismsDiffer>false</organismsDiffer>
    <experiments>3</experiments>
</comment>
<comment type="interaction">
    <interactant intactId="EBI-26435118">
        <id>P48740-3</id>
    </interactant>
    <interactant intactId="EBI-26435098">
        <id>P48740-2</id>
        <label>MASP1</label>
    </interactant>
    <organismsDiffer>false</organismsDiffer>
    <experiments>2</experiments>
</comment>
<comment type="interaction">
    <interactant intactId="EBI-26435118">
        <id>P48740-3</id>
    </interactant>
    <interactant intactId="EBI-26435118">
        <id>P48740-3</id>
        <label>MASP1</label>
    </interactant>
    <organismsDiffer>false</organismsDiffer>
    <experiments>3</experiments>
</comment>
<comment type="interaction">
    <interactant intactId="EBI-26435118">
        <id>P48740-3</id>
    </interactant>
    <interactant intactId="EBI-26357096">
        <id>O00187-1</id>
        <label>MASP2</label>
    </interactant>
    <organismsDiffer>false</organismsDiffer>
    <experiments>7</experiments>
</comment>
<comment type="interaction">
    <interactant intactId="EBI-26435118">
        <id>P48740-3</id>
    </interactant>
    <interactant intactId="EBI-5325353">
        <id>P11226</id>
        <label>MBL2</label>
    </interactant>
    <organismsDiffer>false</organismsDiffer>
    <experiments>7</experiments>
</comment>
<comment type="interaction">
    <interactant intactId="EBI-26356151">
        <id>PRO_0000027592</id>
    </interactant>
    <interactant intactId="EBI-5325353">
        <id>P11226</id>
        <label>MBL2</label>
    </interactant>
    <organismsDiffer>false</organismsDiffer>
    <experiments>2</experiments>
</comment>
<comment type="subcellular location">
    <subcellularLocation>
        <location evidence="10">Secreted</location>
    </subcellularLocation>
</comment>
<comment type="alternative products">
    <event type="alternative splicing"/>
    <isoform>
        <id>P48740-1</id>
        <name>1</name>
        <sequence type="displayed"/>
    </isoform>
    <isoform>
        <id>P48740-2</id>
        <name>2</name>
        <name>MASP-3</name>
        <sequence type="described" ref="VSP_036812 VSP_036813"/>
    </isoform>
    <isoform>
        <id>P48740-3</id>
        <name>3</name>
        <sequence type="described" ref="VSP_036810 VSP_036811"/>
    </isoform>
    <isoform>
        <id>P48740-4</id>
        <name>4</name>
        <sequence type="described" ref="VSP_036809 VSP_036812 VSP_036813"/>
    </isoform>
</comment>
<comment type="tissue specificity">
    <text evidence="10 23 24 26">Protein of the plasma which is primarily expressed by liver.</text>
</comment>
<comment type="PTM">
    <text evidence="1">The iron and 2-oxoglutarate dependent 3-hydroxylation of aspartate and asparagine is (R) stereospecific within EGF domains.</text>
</comment>
<comment type="PTM">
    <text evidence="1">N-glycosylated. Some N-linked glycan are of the complex-type (By similarity).</text>
</comment>
<comment type="PTM">
    <text evidence="9">Autoproteolytic processing of the proenzyme produces the active enzyme composed on the heavy and the light chain held together by a disulfide bond. Isoform 1 but not isoform 2 is activated through autoproteolytic processing.</text>
</comment>
<comment type="disease" evidence="20 21 22">
    <disease id="DI-03129">
        <name>3MC syndrome 1</name>
        <acronym>3MC1</acronym>
        <description>A form of 3MC syndrome, an autosomal recessive disorder characterized by facial dysmorphism, craniosynostosis, learning disability, and genital, limb and vesicorenal anomalies. Facial features include hypertelorism, blepharophimosis, blepharoptosis and highly arched eyebrows, cleft lip and/or palate. The term 3MC syndrome includes Carnevale, Mingarelli, Malpuech, and Michels syndromes.</description>
        <dbReference type="MIM" id="257920"/>
    </disease>
    <text>The disease is caused by variants affecting the gene represented in this entry.</text>
</comment>
<comment type="similarity">
    <text evidence="4">Belongs to the peptidase S1 family.</text>
</comment>
<comment type="sequence caution" evidence="31">
    <conflict type="erroneous initiation">
        <sequence resource="EMBL-CDS" id="AAH39724"/>
    </conflict>
    <text>Extended N-terminus.</text>
</comment>
<evidence type="ECO:0000250" key="1"/>
<evidence type="ECO:0000255" key="2"/>
<evidence type="ECO:0000255" key="3">
    <source>
        <dbReference type="PROSITE-ProRule" id="PRU00059"/>
    </source>
</evidence>
<evidence type="ECO:0000255" key="4">
    <source>
        <dbReference type="PROSITE-ProRule" id="PRU00274"/>
    </source>
</evidence>
<evidence type="ECO:0000255" key="5">
    <source>
        <dbReference type="PROSITE-ProRule" id="PRU00302"/>
    </source>
</evidence>
<evidence type="ECO:0000269" key="6">
    <source>
    </source>
</evidence>
<evidence type="ECO:0000269" key="7">
    <source>
    </source>
</evidence>
<evidence type="ECO:0000269" key="8">
    <source>
    </source>
</evidence>
<evidence type="ECO:0000269" key="9">
    <source>
    </source>
</evidence>
<evidence type="ECO:0000269" key="10">
    <source>
    </source>
</evidence>
<evidence type="ECO:0000269" key="11">
    <source>
    </source>
</evidence>
<evidence type="ECO:0000269" key="12">
    <source>
    </source>
</evidence>
<evidence type="ECO:0000269" key="13">
    <source>
    </source>
</evidence>
<evidence type="ECO:0000269" key="14">
    <source>
    </source>
</evidence>
<evidence type="ECO:0000269" key="15">
    <source>
    </source>
</evidence>
<evidence type="ECO:0000269" key="16">
    <source>
    </source>
</evidence>
<evidence type="ECO:0000269" key="17">
    <source>
    </source>
</evidence>
<evidence type="ECO:0000269" key="18">
    <source>
    </source>
</evidence>
<evidence type="ECO:0000269" key="19">
    <source>
    </source>
</evidence>
<evidence type="ECO:0000269" key="20">
    <source>
    </source>
</evidence>
<evidence type="ECO:0000269" key="21">
    <source>
    </source>
</evidence>
<evidence type="ECO:0000269" key="22">
    <source>
    </source>
</evidence>
<evidence type="ECO:0000269" key="23">
    <source>
    </source>
</evidence>
<evidence type="ECO:0000269" key="24">
    <source>
    </source>
</evidence>
<evidence type="ECO:0000269" key="25">
    <source>
    </source>
</evidence>
<evidence type="ECO:0000269" key="26">
    <source>
    </source>
</evidence>
<evidence type="ECO:0000303" key="27">
    <source>
    </source>
</evidence>
<evidence type="ECO:0000303" key="28">
    <source>
    </source>
</evidence>
<evidence type="ECO:0000303" key="29">
    <source>
    </source>
</evidence>
<evidence type="ECO:0000303" key="30">
    <source>
    </source>
</evidence>
<evidence type="ECO:0000305" key="31"/>
<evidence type="ECO:0007829" key="32">
    <source>
        <dbReference type="PDB" id="3DEM"/>
    </source>
</evidence>
<evidence type="ECO:0007829" key="33">
    <source>
        <dbReference type="PDB" id="3GOV"/>
    </source>
</evidence>
<evidence type="ECO:0007829" key="34">
    <source>
        <dbReference type="PDB" id="4DJZ"/>
    </source>
</evidence>
<evidence type="ECO:0007829" key="35">
    <source>
        <dbReference type="PDB" id="4IGD"/>
    </source>
</evidence>
<dbReference type="EC" id="3.4.21.-"/>
<dbReference type="EMBL" id="D17525">
    <property type="protein sequence ID" value="BAA04477.1"/>
    <property type="molecule type" value="mRNA"/>
</dbReference>
<dbReference type="EMBL" id="D28593">
    <property type="protein sequence ID" value="BAA05928.1"/>
    <property type="molecule type" value="mRNA"/>
</dbReference>
<dbReference type="EMBL" id="D61695">
    <property type="protein sequence ID" value="BAA34864.1"/>
    <property type="molecule type" value="Genomic_DNA"/>
</dbReference>
<dbReference type="EMBL" id="AB007617">
    <property type="protein sequence ID" value="BAA89206.1"/>
    <property type="molecule type" value="Genomic_DNA"/>
</dbReference>
<dbReference type="EMBL" id="AF284421">
    <property type="protein sequence ID" value="AAK84071.1"/>
    <property type="molecule type" value="mRNA"/>
</dbReference>
<dbReference type="EMBL" id="AK291157">
    <property type="protein sequence ID" value="BAF83846.1"/>
    <property type="molecule type" value="mRNA"/>
</dbReference>
<dbReference type="EMBL" id="AK291686">
    <property type="protein sequence ID" value="BAF84375.1"/>
    <property type="molecule type" value="mRNA"/>
</dbReference>
<dbReference type="EMBL" id="AK304334">
    <property type="protein sequence ID" value="BAG65179.1"/>
    <property type="molecule type" value="mRNA"/>
</dbReference>
<dbReference type="EMBL" id="CR749615">
    <property type="protein sequence ID" value="CAH18409.1"/>
    <property type="molecule type" value="mRNA"/>
</dbReference>
<dbReference type="EMBL" id="AC007920">
    <property type="status" value="NOT_ANNOTATED_CDS"/>
    <property type="molecule type" value="Genomic_DNA"/>
</dbReference>
<dbReference type="EMBL" id="CH471052">
    <property type="protein sequence ID" value="EAW78153.1"/>
    <property type="molecule type" value="Genomic_DNA"/>
</dbReference>
<dbReference type="EMBL" id="BC039724">
    <property type="protein sequence ID" value="AAH39724.1"/>
    <property type="status" value="ALT_INIT"/>
    <property type="molecule type" value="mRNA"/>
</dbReference>
<dbReference type="EMBL" id="BC106945">
    <property type="protein sequence ID" value="AAI06946.1"/>
    <property type="molecule type" value="mRNA"/>
</dbReference>
<dbReference type="EMBL" id="BC106946">
    <property type="protein sequence ID" value="AAI06947.1"/>
    <property type="molecule type" value="mRNA"/>
</dbReference>
<dbReference type="CCDS" id="CCDS33907.1">
    <molecule id="P48740-1"/>
</dbReference>
<dbReference type="CCDS" id="CCDS33908.1">
    <molecule id="P48740-2"/>
</dbReference>
<dbReference type="CCDS" id="CCDS33909.1">
    <molecule id="P48740-3"/>
</dbReference>
<dbReference type="PIR" id="I54763">
    <property type="entry name" value="I54763"/>
</dbReference>
<dbReference type="RefSeq" id="NP_001027019.1">
    <molecule id="P48740-3"/>
    <property type="nucleotide sequence ID" value="NM_001031849.3"/>
</dbReference>
<dbReference type="RefSeq" id="NP_001870.3">
    <molecule id="P48740-1"/>
    <property type="nucleotide sequence ID" value="NM_001879.5"/>
</dbReference>
<dbReference type="RefSeq" id="NP_624302.1">
    <molecule id="P48740-2"/>
    <property type="nucleotide sequence ID" value="NM_139125.4"/>
</dbReference>
<dbReference type="RefSeq" id="XP_016862361.1">
    <property type="nucleotide sequence ID" value="XM_017006872.1"/>
</dbReference>
<dbReference type="PDB" id="3DEM">
    <property type="method" value="X-ray"/>
    <property type="resolution" value="2.30 A"/>
    <property type="chains" value="A/B=20-297"/>
</dbReference>
<dbReference type="PDB" id="3GOV">
    <property type="method" value="X-ray"/>
    <property type="resolution" value="2.55 A"/>
    <property type="chains" value="A=298-448, B=449-699"/>
</dbReference>
<dbReference type="PDB" id="4AQB">
    <property type="method" value="X-ray"/>
    <property type="resolution" value="4.20 A"/>
    <property type="chains" value="A=20-363"/>
</dbReference>
<dbReference type="PDB" id="4DJZ">
    <property type="method" value="X-ray"/>
    <property type="resolution" value="3.20 A"/>
    <property type="chains" value="A/C=298-448, B/D=449-699"/>
</dbReference>
<dbReference type="PDB" id="4IGD">
    <property type="method" value="X-ray"/>
    <property type="resolution" value="2.50 A"/>
    <property type="chains" value="A=298-699"/>
</dbReference>
<dbReference type="PDB" id="4IW4">
    <property type="method" value="X-ray"/>
    <property type="resolution" value="3.20 A"/>
    <property type="chains" value="E/F=625-696"/>
</dbReference>
<dbReference type="PDB" id="4KKD">
    <property type="method" value="X-ray"/>
    <property type="resolution" value="2.60 A"/>
    <property type="chains" value="A/B=298-696"/>
</dbReference>
<dbReference type="PDB" id="7PQO">
    <property type="method" value="X-ray"/>
    <property type="resolution" value="3.39 A"/>
    <property type="chains" value="A/B/C=298-699"/>
</dbReference>
<dbReference type="PDBsum" id="3DEM"/>
<dbReference type="PDBsum" id="3GOV"/>
<dbReference type="PDBsum" id="4AQB"/>
<dbReference type="PDBsum" id="4DJZ"/>
<dbReference type="PDBsum" id="4IGD"/>
<dbReference type="PDBsum" id="4IW4"/>
<dbReference type="PDBsum" id="4KKD"/>
<dbReference type="PDBsum" id="7PQO"/>
<dbReference type="SMR" id="P48740"/>
<dbReference type="BioGRID" id="111629">
    <property type="interactions" value="25"/>
</dbReference>
<dbReference type="ComplexPortal" id="CPX-6170">
    <property type="entry name" value="MBL2-MASP1 lectin-protease complex"/>
</dbReference>
<dbReference type="ComplexPortal" id="CPX-6172">
    <property type="entry name" value="FCN1-MASP1 lectin-protease complex"/>
</dbReference>
<dbReference type="ComplexPortal" id="CPX-6178">
    <property type="entry name" value="FCN2-MASP1 lectin-protease complex"/>
</dbReference>
<dbReference type="ComplexPortal" id="CPX-6179">
    <property type="entry name" value="FCN3-MASP1 lectin-protease complex"/>
</dbReference>
<dbReference type="ComplexPortal" id="CPX-6181">
    <property type="entry name" value="CL-LK-MASP1 lectin-protease complex"/>
</dbReference>
<dbReference type="CORUM" id="P48740"/>
<dbReference type="DIP" id="DIP-61382N"/>
<dbReference type="FunCoup" id="P48740">
    <property type="interactions" value="712"/>
</dbReference>
<dbReference type="IntAct" id="P48740">
    <property type="interactions" value="34"/>
</dbReference>
<dbReference type="MINT" id="P48740"/>
<dbReference type="BindingDB" id="P48740"/>
<dbReference type="ChEMBL" id="CHEMBL4295768"/>
<dbReference type="MEROPS" id="S01.132"/>
<dbReference type="MEROPS" id="S01.198"/>
<dbReference type="GlyConnect" id="1488">
    <property type="glycosylation" value="6 N-Linked glycans (3 sites)"/>
</dbReference>
<dbReference type="GlyCosmos" id="P48740">
    <property type="glycosylation" value="6 sites, 9 glycans"/>
</dbReference>
<dbReference type="GlyGen" id="P48740">
    <property type="glycosylation" value="5 sites, 22 N-linked glycans (3 sites), 1 O-linked glycan (1 site)"/>
</dbReference>
<dbReference type="iPTMnet" id="P48740"/>
<dbReference type="PhosphoSitePlus" id="P48740"/>
<dbReference type="BioMuta" id="MASP1"/>
<dbReference type="DMDM" id="218512135"/>
<dbReference type="CPTAC" id="non-CPTAC-2682"/>
<dbReference type="jPOST" id="P48740"/>
<dbReference type="MassIVE" id="P48740"/>
<dbReference type="PeptideAtlas" id="P48740"/>
<dbReference type="ProteomicsDB" id="55936">
    <molecule id="P48740-1"/>
</dbReference>
<dbReference type="ProteomicsDB" id="55937">
    <molecule id="P48740-2"/>
</dbReference>
<dbReference type="ProteomicsDB" id="55938">
    <molecule id="P48740-3"/>
</dbReference>
<dbReference type="ProteomicsDB" id="55939">
    <molecule id="P48740-4"/>
</dbReference>
<dbReference type="TopDownProteomics" id="P48740-3">
    <molecule id="P48740-3"/>
</dbReference>
<dbReference type="Antibodypedia" id="889">
    <property type="antibodies" value="374 antibodies from 28 providers"/>
</dbReference>
<dbReference type="DNASU" id="5648"/>
<dbReference type="Ensembl" id="ENST00000169293.10">
    <molecule id="P48740-3"/>
    <property type="protein sequence ID" value="ENSP00000169293.6"/>
    <property type="gene ID" value="ENSG00000127241.18"/>
</dbReference>
<dbReference type="Ensembl" id="ENST00000296280.11">
    <molecule id="P48740-2"/>
    <property type="protein sequence ID" value="ENSP00000296280.7"/>
    <property type="gene ID" value="ENSG00000127241.18"/>
</dbReference>
<dbReference type="Ensembl" id="ENST00000337774.10">
    <molecule id="P48740-1"/>
    <property type="protein sequence ID" value="ENSP00000336792.5"/>
    <property type="gene ID" value="ENSG00000127241.18"/>
</dbReference>
<dbReference type="Ensembl" id="ENST00000392472.6">
    <molecule id="P48740-4"/>
    <property type="protein sequence ID" value="ENSP00000376264.2"/>
    <property type="gene ID" value="ENSG00000127241.18"/>
</dbReference>
<dbReference type="Ensembl" id="ENST00000707990.1">
    <molecule id="P48740-1"/>
    <property type="protein sequence ID" value="ENSP00000517061.1"/>
    <property type="gene ID" value="ENSG00000291559.1"/>
</dbReference>
<dbReference type="Ensembl" id="ENST00000707993.1">
    <molecule id="P48740-2"/>
    <property type="protein sequence ID" value="ENSP00000517062.1"/>
    <property type="gene ID" value="ENSG00000291559.1"/>
</dbReference>
<dbReference type="Ensembl" id="ENST00000707994.1">
    <molecule id="P48740-4"/>
    <property type="protein sequence ID" value="ENSP00000517063.1"/>
    <property type="gene ID" value="ENSG00000291559.1"/>
</dbReference>
<dbReference type="Ensembl" id="ENST00000707996.1">
    <molecule id="P48740-3"/>
    <property type="protein sequence ID" value="ENSP00000517064.1"/>
    <property type="gene ID" value="ENSG00000291559.1"/>
</dbReference>
<dbReference type="GeneID" id="5648"/>
<dbReference type="KEGG" id="hsa:5648"/>
<dbReference type="MANE-Select" id="ENST00000296280.11">
    <molecule id="P48740-2"/>
    <property type="protein sequence ID" value="ENSP00000296280.7"/>
    <property type="RefSeq nucleotide sequence ID" value="NM_139125.4"/>
    <property type="RefSeq protein sequence ID" value="NP_624302.1"/>
</dbReference>
<dbReference type="UCSC" id="uc003frh.3">
    <molecule id="P48740-1"/>
    <property type="organism name" value="human"/>
</dbReference>
<dbReference type="AGR" id="HGNC:6901"/>
<dbReference type="CTD" id="5648"/>
<dbReference type="DisGeNET" id="5648"/>
<dbReference type="GeneCards" id="MASP1"/>
<dbReference type="HGNC" id="HGNC:6901">
    <property type="gene designation" value="MASP1"/>
</dbReference>
<dbReference type="HPA" id="ENSG00000127241">
    <property type="expression patterns" value="Tissue enhanced (cervix, heart muscle, liver)"/>
</dbReference>
<dbReference type="MalaCards" id="MASP1"/>
<dbReference type="MIM" id="257920">
    <property type="type" value="phenotype"/>
</dbReference>
<dbReference type="MIM" id="600521">
    <property type="type" value="gene"/>
</dbReference>
<dbReference type="neXtProt" id="NX_P48740"/>
<dbReference type="OpenTargets" id="ENSG00000127241"/>
<dbReference type="Orphanet" id="293843">
    <property type="disease" value="3MC syndrome"/>
</dbReference>
<dbReference type="PharmGKB" id="PA30644"/>
<dbReference type="VEuPathDB" id="HostDB:ENSG00000127241"/>
<dbReference type="GeneTree" id="ENSGT00950000183084"/>
<dbReference type="HOGENOM" id="CLU_006842_14_1_1"/>
<dbReference type="InParanoid" id="P48740"/>
<dbReference type="OMA" id="QHWVAQG"/>
<dbReference type="OrthoDB" id="9985152at2759"/>
<dbReference type="PAN-GO" id="P48740">
    <property type="GO annotations" value="3 GO annotations based on evolutionary models"/>
</dbReference>
<dbReference type="PhylomeDB" id="P48740"/>
<dbReference type="TreeFam" id="TF330373"/>
<dbReference type="BRENDA" id="3.4.21.B7">
    <property type="organism ID" value="2681"/>
</dbReference>
<dbReference type="PathwayCommons" id="P48740"/>
<dbReference type="Reactome" id="R-HSA-166662">
    <property type="pathway name" value="Lectin pathway of complement activation"/>
</dbReference>
<dbReference type="Reactome" id="R-HSA-166663">
    <property type="pathway name" value="Initial triggering of complement"/>
</dbReference>
<dbReference type="Reactome" id="R-HSA-2855086">
    <property type="pathway name" value="Ficolins bind to repetitive carbohydrate structures on the target cell surface"/>
</dbReference>
<dbReference type="Reactome" id="R-HSA-3000480">
    <property type="pathway name" value="Scavenging by Class A Receptors"/>
</dbReference>
<dbReference type="Reactome" id="R-HSA-9705671">
    <property type="pathway name" value="SARS-CoV-2 activates/modulates innate and adaptive immune responses"/>
</dbReference>
<dbReference type="SABIO-RK" id="P48740"/>
<dbReference type="SignaLink" id="P48740"/>
<dbReference type="SIGNOR" id="P48740"/>
<dbReference type="BioGRID-ORCS" id="5648">
    <property type="hits" value="13 hits in 1148 CRISPR screens"/>
</dbReference>
<dbReference type="ChiTaRS" id="MASP1">
    <property type="organism name" value="human"/>
</dbReference>
<dbReference type="EvolutionaryTrace" id="P48740"/>
<dbReference type="GeneWiki" id="MASP1_(protein)"/>
<dbReference type="GenomeRNAi" id="5648"/>
<dbReference type="Pharos" id="P48740">
    <property type="development level" value="Tchem"/>
</dbReference>
<dbReference type="PRO" id="PR:P48740"/>
<dbReference type="Proteomes" id="UP000005640">
    <property type="component" value="Chromosome 3"/>
</dbReference>
<dbReference type="RNAct" id="P48740">
    <property type="molecule type" value="protein"/>
</dbReference>
<dbReference type="Bgee" id="ENSG00000127241">
    <property type="expression patterns" value="Expressed in endocervix and 136 other cell types or tissues"/>
</dbReference>
<dbReference type="ExpressionAtlas" id="P48740">
    <property type="expression patterns" value="baseline and differential"/>
</dbReference>
<dbReference type="GO" id="GO:0005829">
    <property type="term" value="C:cytosol"/>
    <property type="evidence" value="ECO:0000314"/>
    <property type="project" value="HPA"/>
</dbReference>
<dbReference type="GO" id="GO:0005576">
    <property type="term" value="C:extracellular region"/>
    <property type="evidence" value="ECO:0000304"/>
    <property type="project" value="Reactome"/>
</dbReference>
<dbReference type="GO" id="GO:0005615">
    <property type="term" value="C:extracellular space"/>
    <property type="evidence" value="ECO:0000314"/>
    <property type="project" value="UniProtKB"/>
</dbReference>
<dbReference type="GO" id="GO:0005654">
    <property type="term" value="C:nucleoplasm"/>
    <property type="evidence" value="ECO:0000314"/>
    <property type="project" value="HPA"/>
</dbReference>
<dbReference type="GO" id="GO:0005509">
    <property type="term" value="F:calcium ion binding"/>
    <property type="evidence" value="ECO:0000314"/>
    <property type="project" value="UniProtKB"/>
</dbReference>
<dbReference type="GO" id="GO:0048306">
    <property type="term" value="F:calcium-dependent protein binding"/>
    <property type="evidence" value="ECO:0000353"/>
    <property type="project" value="UniProtKB"/>
</dbReference>
<dbReference type="GO" id="GO:0042802">
    <property type="term" value="F:identical protein binding"/>
    <property type="evidence" value="ECO:0000353"/>
    <property type="project" value="IntAct"/>
</dbReference>
<dbReference type="GO" id="GO:0008233">
    <property type="term" value="F:peptidase activity"/>
    <property type="evidence" value="ECO:0000314"/>
    <property type="project" value="UniProtKB"/>
</dbReference>
<dbReference type="GO" id="GO:0042803">
    <property type="term" value="F:protein homodimerization activity"/>
    <property type="evidence" value="ECO:0000353"/>
    <property type="project" value="UniProtKB"/>
</dbReference>
<dbReference type="GO" id="GO:0004252">
    <property type="term" value="F:serine-type endopeptidase activity"/>
    <property type="evidence" value="ECO:0000314"/>
    <property type="project" value="UniProtKB"/>
</dbReference>
<dbReference type="GO" id="GO:0001867">
    <property type="term" value="P:complement activation, lectin pathway"/>
    <property type="evidence" value="ECO:0000315"/>
    <property type="project" value="UniProtKB"/>
</dbReference>
<dbReference type="GO" id="GO:0045916">
    <property type="term" value="P:negative regulation of complement activation"/>
    <property type="evidence" value="ECO:0000314"/>
    <property type="project" value="UniProtKB"/>
</dbReference>
<dbReference type="GO" id="GO:0006508">
    <property type="term" value="P:proteolysis"/>
    <property type="evidence" value="ECO:0007669"/>
    <property type="project" value="UniProtKB-KW"/>
</dbReference>
<dbReference type="CDD" id="cd00033">
    <property type="entry name" value="CCP"/>
    <property type="match status" value="1"/>
</dbReference>
<dbReference type="CDD" id="cd00041">
    <property type="entry name" value="CUB"/>
    <property type="match status" value="2"/>
</dbReference>
<dbReference type="CDD" id="cd00054">
    <property type="entry name" value="EGF_CA"/>
    <property type="match status" value="1"/>
</dbReference>
<dbReference type="CDD" id="cd00190">
    <property type="entry name" value="Tryp_SPc"/>
    <property type="match status" value="1"/>
</dbReference>
<dbReference type="DisProt" id="DP02816">
    <molecule id="P48740-3"/>
</dbReference>
<dbReference type="FunFam" id="2.40.10.10:FF:000015">
    <property type="entry name" value="Atrial natriuretic peptide-converting enzyme"/>
    <property type="match status" value="1"/>
</dbReference>
<dbReference type="FunFam" id="2.10.25.10:FF:000059">
    <property type="entry name" value="Mannan-binding lectin serine protease 1"/>
    <property type="match status" value="1"/>
</dbReference>
<dbReference type="FunFam" id="2.10.70.10:FF:000016">
    <property type="entry name" value="Mannan-binding lectin serine protease 1"/>
    <property type="match status" value="1"/>
</dbReference>
<dbReference type="FunFam" id="2.60.120.290:FF:000006">
    <property type="entry name" value="Mannan-binding lectin serine protease 1"/>
    <property type="match status" value="1"/>
</dbReference>
<dbReference type="FunFam" id="2.60.120.290:FF:000012">
    <property type="entry name" value="mannan-binding lectin serine protease 1 isoform X1"/>
    <property type="match status" value="1"/>
</dbReference>
<dbReference type="FunFam" id="2.10.70.10:FF:000028">
    <property type="entry name" value="mannan-binding lectin serine protease 1 isoform X2"/>
    <property type="match status" value="1"/>
</dbReference>
<dbReference type="Gene3D" id="2.10.70.10">
    <property type="entry name" value="Complement Module, domain 1"/>
    <property type="match status" value="2"/>
</dbReference>
<dbReference type="Gene3D" id="2.10.25.10">
    <property type="entry name" value="Laminin"/>
    <property type="match status" value="1"/>
</dbReference>
<dbReference type="Gene3D" id="2.60.120.290">
    <property type="entry name" value="Spermadhesin, CUB domain"/>
    <property type="match status" value="2"/>
</dbReference>
<dbReference type="Gene3D" id="2.40.10.10">
    <property type="entry name" value="Trypsin-like serine proteases"/>
    <property type="match status" value="1"/>
</dbReference>
<dbReference type="InterPro" id="IPR000859">
    <property type="entry name" value="CUB_dom"/>
</dbReference>
<dbReference type="InterPro" id="IPR001881">
    <property type="entry name" value="EGF-like_Ca-bd_dom"/>
</dbReference>
<dbReference type="InterPro" id="IPR000742">
    <property type="entry name" value="EGF-like_dom"/>
</dbReference>
<dbReference type="InterPro" id="IPR018097">
    <property type="entry name" value="EGF_Ca-bd_CS"/>
</dbReference>
<dbReference type="InterPro" id="IPR024175">
    <property type="entry name" value="Pept_S1A_C1r/C1S/mannan-bd"/>
</dbReference>
<dbReference type="InterPro" id="IPR009003">
    <property type="entry name" value="Peptidase_S1_PA"/>
</dbReference>
<dbReference type="InterPro" id="IPR043504">
    <property type="entry name" value="Peptidase_S1_PA_chymotrypsin"/>
</dbReference>
<dbReference type="InterPro" id="IPR001314">
    <property type="entry name" value="Peptidase_S1A"/>
</dbReference>
<dbReference type="InterPro" id="IPR035914">
    <property type="entry name" value="Sperma_CUB_dom_sf"/>
</dbReference>
<dbReference type="InterPro" id="IPR035976">
    <property type="entry name" value="Sushi/SCR/CCP_sf"/>
</dbReference>
<dbReference type="InterPro" id="IPR000436">
    <property type="entry name" value="Sushi_SCR_CCP_dom"/>
</dbReference>
<dbReference type="InterPro" id="IPR001254">
    <property type="entry name" value="Trypsin_dom"/>
</dbReference>
<dbReference type="InterPro" id="IPR018114">
    <property type="entry name" value="TRYPSIN_HIS"/>
</dbReference>
<dbReference type="InterPro" id="IPR033116">
    <property type="entry name" value="TRYPSIN_SER"/>
</dbReference>
<dbReference type="PANTHER" id="PTHR24255">
    <property type="entry name" value="COMPLEMENT COMPONENT 1, S SUBCOMPONENT-RELATED"/>
    <property type="match status" value="1"/>
</dbReference>
<dbReference type="PANTHER" id="PTHR24255:SF13">
    <property type="entry name" value="MANNAN-BINDING LECTIN SERINE PROTEASE 1"/>
    <property type="match status" value="1"/>
</dbReference>
<dbReference type="Pfam" id="PF00431">
    <property type="entry name" value="CUB"/>
    <property type="match status" value="2"/>
</dbReference>
<dbReference type="Pfam" id="PF00084">
    <property type="entry name" value="Sushi"/>
    <property type="match status" value="2"/>
</dbReference>
<dbReference type="Pfam" id="PF00089">
    <property type="entry name" value="Trypsin"/>
    <property type="match status" value="1"/>
</dbReference>
<dbReference type="PIRSF" id="PIRSF001155">
    <property type="entry name" value="C1r_C1s_MASP"/>
    <property type="match status" value="1"/>
</dbReference>
<dbReference type="PRINTS" id="PR00722">
    <property type="entry name" value="CHYMOTRYPSIN"/>
</dbReference>
<dbReference type="SMART" id="SM00032">
    <property type="entry name" value="CCP"/>
    <property type="match status" value="2"/>
</dbReference>
<dbReference type="SMART" id="SM00042">
    <property type="entry name" value="CUB"/>
    <property type="match status" value="2"/>
</dbReference>
<dbReference type="SMART" id="SM00179">
    <property type="entry name" value="EGF_CA"/>
    <property type="match status" value="1"/>
</dbReference>
<dbReference type="SMART" id="SM00020">
    <property type="entry name" value="Tryp_SPc"/>
    <property type="match status" value="1"/>
</dbReference>
<dbReference type="SUPFAM" id="SSF57535">
    <property type="entry name" value="Complement control module/SCR domain"/>
    <property type="match status" value="2"/>
</dbReference>
<dbReference type="SUPFAM" id="SSF57196">
    <property type="entry name" value="EGF/Laminin"/>
    <property type="match status" value="1"/>
</dbReference>
<dbReference type="SUPFAM" id="SSF49854">
    <property type="entry name" value="Spermadhesin, CUB domain"/>
    <property type="match status" value="2"/>
</dbReference>
<dbReference type="SUPFAM" id="SSF50494">
    <property type="entry name" value="Trypsin-like serine proteases"/>
    <property type="match status" value="1"/>
</dbReference>
<dbReference type="PROSITE" id="PS00010">
    <property type="entry name" value="ASX_HYDROXYL"/>
    <property type="match status" value="1"/>
</dbReference>
<dbReference type="PROSITE" id="PS01180">
    <property type="entry name" value="CUB"/>
    <property type="match status" value="2"/>
</dbReference>
<dbReference type="PROSITE" id="PS01186">
    <property type="entry name" value="EGF_2"/>
    <property type="match status" value="1"/>
</dbReference>
<dbReference type="PROSITE" id="PS01187">
    <property type="entry name" value="EGF_CA"/>
    <property type="match status" value="1"/>
</dbReference>
<dbReference type="PROSITE" id="PS50923">
    <property type="entry name" value="SUSHI"/>
    <property type="match status" value="2"/>
</dbReference>
<dbReference type="PROSITE" id="PS50240">
    <property type="entry name" value="TRYPSIN_DOM"/>
    <property type="match status" value="1"/>
</dbReference>
<dbReference type="PROSITE" id="PS00134">
    <property type="entry name" value="TRYPSIN_HIS"/>
    <property type="match status" value="1"/>
</dbReference>
<dbReference type="PROSITE" id="PS00135">
    <property type="entry name" value="TRYPSIN_SER"/>
    <property type="match status" value="1"/>
</dbReference>
<proteinExistence type="evidence at protein level"/>
<name>MASP1_HUMAN</name>
<sequence length="699" mass="79247">MRWLLLYYALCFSLSKASAHTVELNNMFGQIQSPGYPDSYPSDSEVTWNITVPDGFRIKLYFMHFNLESSYLCEYDYVKVETEDQVLATFCGRETTDTEQTPGQEVVLSPGSFMSITFRSDFSNEERFTGFDAHYMAVDVDECKEREDEELSCDHYCHNYIGGYYCSCRFGYILHTDNRTCRVECSDNLFTQRTGVITSPDFPNPYPKSSECLYTIELEEGFMVNLQFEDIFDIEDHPEVPCPYDYIKIKVGPKVLGPFCGEKAPEPISTQSHSVLILFHSDNSGENRGWRLSYRAAGNECPELQPPVHGKIEPSQAKYFFKDQVLVSCDTGYKVLKDNVEMDTFQIECLKDGTWSNKIPTCKIVDCRAPGELEHGLITFSTRNNLTTYKSEIKYSCQEPYYKMLNNNTGIYTCSAQGVWMNKVLGRSLPTCLPVCGLPKFSRKLMARIFNGRPAQKGTTPWIAMLSHLNGQPFCGGSLLGSSWIVTAAHCLHQSLDPEDPTLRDSDLLSPSDFKIILGKHWRLRSDENEQHLGVKHTTLHPQYDPNTFENDVALVELLESPVLNAFVMPICLPEGPQQEGAMVIVSGWGKQFLQRFPETLMEIEIPIVDHSTCQKAYAPLKKKVTRDMICAGEKEGGKDACAGDSGGPMVTLNRERGQWYLVGTVSWGDDCGKKDRYGVYSYIHHNKDWIQRVTGVRN</sequence>
<protein>
    <recommendedName>
        <fullName>Mannan-binding lectin serine protease 1</fullName>
        <ecNumber>3.4.21.-</ecNumber>
    </recommendedName>
    <alternativeName>
        <fullName>Complement factor MASP-3</fullName>
    </alternativeName>
    <alternativeName>
        <fullName>Complement-activating component of Ra-reactive factor</fullName>
    </alternativeName>
    <alternativeName>
        <fullName>Mannose-binding lectin-associated serine protease 1</fullName>
        <shortName>MASP-1</shortName>
    </alternativeName>
    <alternativeName>
        <fullName>Mannose-binding protein-associated serine protease</fullName>
    </alternativeName>
    <alternativeName>
        <fullName>Ra-reactive factor serine protease p100</fullName>
        <shortName>RaRF</shortName>
    </alternativeName>
    <alternativeName>
        <fullName>Serine protease 5</fullName>
    </alternativeName>
    <component>
        <recommendedName>
            <fullName>Mannan-binding lectin serine protease 1 heavy chain</fullName>
        </recommendedName>
    </component>
    <component>
        <recommendedName>
            <fullName>Mannan-binding lectin serine protease 1 light chain</fullName>
        </recommendedName>
    </component>
</protein>
<keyword id="KW-0002">3D-structure</keyword>
<keyword id="KW-0025">Alternative splicing</keyword>
<keyword id="KW-0068">Autocatalytic cleavage</keyword>
<keyword id="KW-0106">Calcium</keyword>
<keyword id="KW-1018">Complement activation lectin pathway</keyword>
<keyword id="KW-0903">Direct protein sequencing</keyword>
<keyword id="KW-0225">Disease variant</keyword>
<keyword id="KW-1015">Disulfide bond</keyword>
<keyword id="KW-0245">EGF-like domain</keyword>
<keyword id="KW-0325">Glycoprotein</keyword>
<keyword id="KW-0378">Hydrolase</keyword>
<keyword id="KW-0379">Hydroxylation</keyword>
<keyword id="KW-0391">Immunity</keyword>
<keyword id="KW-0399">Innate immunity</keyword>
<keyword id="KW-0479">Metal-binding</keyword>
<keyword id="KW-0645">Protease</keyword>
<keyword id="KW-1267">Proteomics identification</keyword>
<keyword id="KW-1185">Reference proteome</keyword>
<keyword id="KW-0677">Repeat</keyword>
<keyword id="KW-0964">Secreted</keyword>
<keyword id="KW-0720">Serine protease</keyword>
<keyword id="KW-0732">Signal</keyword>
<keyword id="KW-0768">Sushi</keyword>
<accession>P48740</accession>
<accession>A8K542</accession>
<accession>A8K6M1</accession>
<accession>B4E2L7</accession>
<accession>O95570</accession>
<accession>Q68D21</accession>
<accession>Q8IUV8</accession>
<accession>Q96RS4</accession>
<accession>Q9UF09</accession>
<reference key="1">
    <citation type="journal article" date="1993" name="Biochem. Biophys. Res. Commun.">
        <title>A new member of the C1s family of complement proteins found in a bactericidal factor, Ra-reactive factor, in human serum.</title>
        <authorList>
            <person name="Takada F."/>
            <person name="Takayama Y."/>
            <person name="Hatsuse H."/>
            <person name="Kawakami M."/>
        </authorList>
    </citation>
    <scope>NUCLEOTIDE SEQUENCE [MRNA] (ISOFORM 1)</scope>
    <scope>TISSUE SPECIFICITY</scope>
    <source>
        <tissue>Liver</tissue>
    </source>
</reference>
<reference key="2">
    <citation type="journal article" date="1994" name="Int. Immunol.">
        <title>Molecular characterization of a novel serine protease involved in activation of the complement system by mannose-binding protein.</title>
        <authorList>
            <person name="Sato T."/>
            <person name="Endo Y."/>
            <person name="Matsushita M."/>
            <person name="Fujita T."/>
        </authorList>
    </citation>
    <scope>NUCLEOTIDE SEQUENCE [MRNA] (ISOFORM 1)</scope>
    <scope>TISSUE SPECIFICITY</scope>
    <source>
        <tissue>Fetal liver</tissue>
    </source>
</reference>
<reference key="3">
    <citation type="journal article" date="1996" name="Int. Immunol.">
        <title>Exon structure of the gene encoding the human mannose-binding protein-associated serine protease light chain: comparison with complement C1r and C1s genes.</title>
        <authorList>
            <person name="Endo Y."/>
            <person name="Sato T."/>
            <person name="Matsushita M."/>
            <person name="Fujita T."/>
        </authorList>
    </citation>
    <scope>NUCLEOTIDE SEQUENCE [GENOMIC DNA]</scope>
    <source>
        <tissue>Placenta</tissue>
    </source>
</reference>
<reference key="4">
    <citation type="journal article" date="1999" name="Mol. Immunol.">
        <title>Gene structure of the P100 serine-protease component of the human Ra-reactive factor.</title>
        <authorList>
            <person name="Takayama Y."/>
            <person name="Takada F."/>
            <person name="Nowatari M."/>
            <person name="Kawakami M."/>
            <person name="Matsu-ura N."/>
        </authorList>
    </citation>
    <scope>NUCLEOTIDE SEQUENCE [GENOMIC DNA]</scope>
</reference>
<reference key="5">
    <citation type="journal article" date="2001" name="Immunity">
        <title>MASP-3 and its association with distinct complexes of the mannan-binding lectin complement activation pathway.</title>
        <authorList>
            <person name="Dahl M.R."/>
            <person name="Thiel S."/>
            <person name="Matsushita M."/>
            <person name="Fujita T."/>
            <person name="Willis A.C."/>
            <person name="Christensen T."/>
            <person name="Vorup-Jensen T."/>
            <person name="Jensenius J.C."/>
        </authorList>
    </citation>
    <scope>NUCLEOTIDE SEQUENCE [MRNA] (ISOFORM 2)</scope>
    <scope>PROTEIN SEQUENCE OF 450-474; 506-526; 539-555; 577-590; 613-621 AND 679-695 (ISOFORM 2)</scope>
    <scope>FUNCTION</scope>
    <scope>SUBCELLULAR LOCATION</scope>
    <scope>TISSUE SPECIFICITY</scope>
    <source>
        <tissue>Liver</tissue>
    </source>
</reference>
<reference key="6">
    <citation type="journal article" date="2004" name="Nat. Genet.">
        <title>Complete sequencing and characterization of 21,243 full-length human cDNAs.</title>
        <authorList>
            <person name="Ota T."/>
            <person name="Suzuki Y."/>
            <person name="Nishikawa T."/>
            <person name="Otsuki T."/>
            <person name="Sugiyama T."/>
            <person name="Irie R."/>
            <person name="Wakamatsu A."/>
            <person name="Hayashi K."/>
            <person name="Sato H."/>
            <person name="Nagai K."/>
            <person name="Kimura K."/>
            <person name="Makita H."/>
            <person name="Sekine M."/>
            <person name="Obayashi M."/>
            <person name="Nishi T."/>
            <person name="Shibahara T."/>
            <person name="Tanaka T."/>
            <person name="Ishii S."/>
            <person name="Yamamoto J."/>
            <person name="Saito K."/>
            <person name="Kawai Y."/>
            <person name="Isono Y."/>
            <person name="Nakamura Y."/>
            <person name="Nagahari K."/>
            <person name="Murakami K."/>
            <person name="Yasuda T."/>
            <person name="Iwayanagi T."/>
            <person name="Wagatsuma M."/>
            <person name="Shiratori A."/>
            <person name="Sudo H."/>
            <person name="Hosoiri T."/>
            <person name="Kaku Y."/>
            <person name="Kodaira H."/>
            <person name="Kondo H."/>
            <person name="Sugawara M."/>
            <person name="Takahashi M."/>
            <person name="Kanda K."/>
            <person name="Yokoi T."/>
            <person name="Furuya T."/>
            <person name="Kikkawa E."/>
            <person name="Omura Y."/>
            <person name="Abe K."/>
            <person name="Kamihara K."/>
            <person name="Katsuta N."/>
            <person name="Sato K."/>
            <person name="Tanikawa M."/>
            <person name="Yamazaki M."/>
            <person name="Ninomiya K."/>
            <person name="Ishibashi T."/>
            <person name="Yamashita H."/>
            <person name="Murakawa K."/>
            <person name="Fujimori K."/>
            <person name="Tanai H."/>
            <person name="Kimata M."/>
            <person name="Watanabe M."/>
            <person name="Hiraoka S."/>
            <person name="Chiba Y."/>
            <person name="Ishida S."/>
            <person name="Ono Y."/>
            <person name="Takiguchi S."/>
            <person name="Watanabe S."/>
            <person name="Yosida M."/>
            <person name="Hotuta T."/>
            <person name="Kusano J."/>
            <person name="Kanehori K."/>
            <person name="Takahashi-Fujii A."/>
            <person name="Hara H."/>
            <person name="Tanase T.-O."/>
            <person name="Nomura Y."/>
            <person name="Togiya S."/>
            <person name="Komai F."/>
            <person name="Hara R."/>
            <person name="Takeuchi K."/>
            <person name="Arita M."/>
            <person name="Imose N."/>
            <person name="Musashino K."/>
            <person name="Yuuki H."/>
            <person name="Oshima A."/>
            <person name="Sasaki N."/>
            <person name="Aotsuka S."/>
            <person name="Yoshikawa Y."/>
            <person name="Matsunawa H."/>
            <person name="Ichihara T."/>
            <person name="Shiohata N."/>
            <person name="Sano S."/>
            <person name="Moriya S."/>
            <person name="Momiyama H."/>
            <person name="Satoh N."/>
            <person name="Takami S."/>
            <person name="Terashima Y."/>
            <person name="Suzuki O."/>
            <person name="Nakagawa S."/>
            <person name="Senoh A."/>
            <person name="Mizoguchi H."/>
            <person name="Goto Y."/>
            <person name="Shimizu F."/>
            <person name="Wakebe H."/>
            <person name="Hishigaki H."/>
            <person name="Watanabe T."/>
            <person name="Sugiyama A."/>
            <person name="Takemoto M."/>
            <person name="Kawakami B."/>
            <person name="Yamazaki M."/>
            <person name="Watanabe K."/>
            <person name="Kumagai A."/>
            <person name="Itakura S."/>
            <person name="Fukuzumi Y."/>
            <person name="Fujimori Y."/>
            <person name="Komiyama M."/>
            <person name="Tashiro H."/>
            <person name="Tanigami A."/>
            <person name="Fujiwara T."/>
            <person name="Ono T."/>
            <person name="Yamada K."/>
            <person name="Fujii Y."/>
            <person name="Ozaki K."/>
            <person name="Hirao M."/>
            <person name="Ohmori Y."/>
            <person name="Kawabata A."/>
            <person name="Hikiji T."/>
            <person name="Kobatake N."/>
            <person name="Inagaki H."/>
            <person name="Ikema Y."/>
            <person name="Okamoto S."/>
            <person name="Okitani R."/>
            <person name="Kawakami T."/>
            <person name="Noguchi S."/>
            <person name="Itoh T."/>
            <person name="Shigeta K."/>
            <person name="Senba T."/>
            <person name="Matsumura K."/>
            <person name="Nakajima Y."/>
            <person name="Mizuno T."/>
            <person name="Morinaga M."/>
            <person name="Sasaki M."/>
            <person name="Togashi T."/>
            <person name="Oyama M."/>
            <person name="Hata H."/>
            <person name="Watanabe M."/>
            <person name="Komatsu T."/>
            <person name="Mizushima-Sugano J."/>
            <person name="Satoh T."/>
            <person name="Shirai Y."/>
            <person name="Takahashi Y."/>
            <person name="Nakagawa K."/>
            <person name="Okumura K."/>
            <person name="Nagase T."/>
            <person name="Nomura N."/>
            <person name="Kikuchi H."/>
            <person name="Masuho Y."/>
            <person name="Yamashita R."/>
            <person name="Nakai K."/>
            <person name="Yada T."/>
            <person name="Nakamura Y."/>
            <person name="Ohara O."/>
            <person name="Isogai T."/>
            <person name="Sugano S."/>
        </authorList>
    </citation>
    <scope>NUCLEOTIDE SEQUENCE [LARGE SCALE MRNA] (ISOFORMS 2 AND 4)</scope>
    <source>
        <tissue>Placenta</tissue>
        <tissue>Teratocarcinoma</tissue>
        <tissue>Trachea</tissue>
    </source>
</reference>
<reference key="7">
    <citation type="journal article" date="2007" name="BMC Genomics">
        <title>The full-ORF clone resource of the German cDNA consortium.</title>
        <authorList>
            <person name="Bechtel S."/>
            <person name="Rosenfelder H."/>
            <person name="Duda A."/>
            <person name="Schmidt C.P."/>
            <person name="Ernst U."/>
            <person name="Wellenreuther R."/>
            <person name="Mehrle A."/>
            <person name="Schuster C."/>
            <person name="Bahr A."/>
            <person name="Bloecker H."/>
            <person name="Heubner D."/>
            <person name="Hoerlein A."/>
            <person name="Michel G."/>
            <person name="Wedler H."/>
            <person name="Koehrer K."/>
            <person name="Ottenwaelder B."/>
            <person name="Poustka A."/>
            <person name="Wiemann S."/>
            <person name="Schupp I."/>
        </authorList>
    </citation>
    <scope>NUCLEOTIDE SEQUENCE [LARGE SCALE MRNA] (ISOFORM 3)</scope>
    <source>
        <tissue>Fetal brain</tissue>
    </source>
</reference>
<reference key="8">
    <citation type="journal article" date="2006" name="Nature">
        <title>The DNA sequence, annotation and analysis of human chromosome 3.</title>
        <authorList>
            <person name="Muzny D.M."/>
            <person name="Scherer S.E."/>
            <person name="Kaul R."/>
            <person name="Wang J."/>
            <person name="Yu J."/>
            <person name="Sudbrak R."/>
            <person name="Buhay C.J."/>
            <person name="Chen R."/>
            <person name="Cree A."/>
            <person name="Ding Y."/>
            <person name="Dugan-Rocha S."/>
            <person name="Gill R."/>
            <person name="Gunaratne P."/>
            <person name="Harris R.A."/>
            <person name="Hawes A.C."/>
            <person name="Hernandez J."/>
            <person name="Hodgson A.V."/>
            <person name="Hume J."/>
            <person name="Jackson A."/>
            <person name="Khan Z.M."/>
            <person name="Kovar-Smith C."/>
            <person name="Lewis L.R."/>
            <person name="Lozado R.J."/>
            <person name="Metzker M.L."/>
            <person name="Milosavljevic A."/>
            <person name="Miner G.R."/>
            <person name="Morgan M.B."/>
            <person name="Nazareth L.V."/>
            <person name="Scott G."/>
            <person name="Sodergren E."/>
            <person name="Song X.-Z."/>
            <person name="Steffen D."/>
            <person name="Wei S."/>
            <person name="Wheeler D.A."/>
            <person name="Wright M.W."/>
            <person name="Worley K.C."/>
            <person name="Yuan Y."/>
            <person name="Zhang Z."/>
            <person name="Adams C.Q."/>
            <person name="Ansari-Lari M.A."/>
            <person name="Ayele M."/>
            <person name="Brown M.J."/>
            <person name="Chen G."/>
            <person name="Chen Z."/>
            <person name="Clendenning J."/>
            <person name="Clerc-Blankenburg K.P."/>
            <person name="Chen R."/>
            <person name="Chen Z."/>
            <person name="Davis C."/>
            <person name="Delgado O."/>
            <person name="Dinh H.H."/>
            <person name="Dong W."/>
            <person name="Draper H."/>
            <person name="Ernst S."/>
            <person name="Fu G."/>
            <person name="Gonzalez-Garay M.L."/>
            <person name="Garcia D.K."/>
            <person name="Gillett W."/>
            <person name="Gu J."/>
            <person name="Hao B."/>
            <person name="Haugen E."/>
            <person name="Havlak P."/>
            <person name="He X."/>
            <person name="Hennig S."/>
            <person name="Hu S."/>
            <person name="Huang W."/>
            <person name="Jackson L.R."/>
            <person name="Jacob L.S."/>
            <person name="Kelly S.H."/>
            <person name="Kube M."/>
            <person name="Levy R."/>
            <person name="Li Z."/>
            <person name="Liu B."/>
            <person name="Liu J."/>
            <person name="Liu W."/>
            <person name="Lu J."/>
            <person name="Maheshwari M."/>
            <person name="Nguyen B.-V."/>
            <person name="Okwuonu G.O."/>
            <person name="Palmeiri A."/>
            <person name="Pasternak S."/>
            <person name="Perez L.M."/>
            <person name="Phelps K.A."/>
            <person name="Plopper F.J."/>
            <person name="Qiang B."/>
            <person name="Raymond C."/>
            <person name="Rodriguez R."/>
            <person name="Saenphimmachak C."/>
            <person name="Santibanez J."/>
            <person name="Shen H."/>
            <person name="Shen Y."/>
            <person name="Subramanian S."/>
            <person name="Tabor P.E."/>
            <person name="Verduzco D."/>
            <person name="Waldron L."/>
            <person name="Wang J."/>
            <person name="Wang J."/>
            <person name="Wang Q."/>
            <person name="Williams G.A."/>
            <person name="Wong G.K.-S."/>
            <person name="Yao Z."/>
            <person name="Zhang J."/>
            <person name="Zhang X."/>
            <person name="Zhao G."/>
            <person name="Zhou J."/>
            <person name="Zhou Y."/>
            <person name="Nelson D."/>
            <person name="Lehrach H."/>
            <person name="Reinhardt R."/>
            <person name="Naylor S.L."/>
            <person name="Yang H."/>
            <person name="Olson M."/>
            <person name="Weinstock G."/>
            <person name="Gibbs R.A."/>
        </authorList>
    </citation>
    <scope>NUCLEOTIDE SEQUENCE [LARGE SCALE GENOMIC DNA]</scope>
</reference>
<reference key="9">
    <citation type="submission" date="2005-09" db="EMBL/GenBank/DDBJ databases">
        <authorList>
            <person name="Mural R.J."/>
            <person name="Istrail S."/>
            <person name="Sutton G.G."/>
            <person name="Florea L."/>
            <person name="Halpern A.L."/>
            <person name="Mobarry C.M."/>
            <person name="Lippert R."/>
            <person name="Walenz B."/>
            <person name="Shatkay H."/>
            <person name="Dew I."/>
            <person name="Miller J.R."/>
            <person name="Flanigan M.J."/>
            <person name="Edwards N.J."/>
            <person name="Bolanos R."/>
            <person name="Fasulo D."/>
            <person name="Halldorsson B.V."/>
            <person name="Hannenhalli S."/>
            <person name="Turner R."/>
            <person name="Yooseph S."/>
            <person name="Lu F."/>
            <person name="Nusskern D.R."/>
            <person name="Shue B.C."/>
            <person name="Zheng X.H."/>
            <person name="Zhong F."/>
            <person name="Delcher A.L."/>
            <person name="Huson D.H."/>
            <person name="Kravitz S.A."/>
            <person name="Mouchard L."/>
            <person name="Reinert K."/>
            <person name="Remington K.A."/>
            <person name="Clark A.G."/>
            <person name="Waterman M.S."/>
            <person name="Eichler E.E."/>
            <person name="Adams M.D."/>
            <person name="Hunkapiller M.W."/>
            <person name="Myers E.W."/>
            <person name="Venter J.C."/>
        </authorList>
    </citation>
    <scope>NUCLEOTIDE SEQUENCE [LARGE SCALE GENOMIC DNA]</scope>
</reference>
<reference key="10">
    <citation type="journal article" date="2004" name="Genome Res.">
        <title>The status, quality, and expansion of the NIH full-length cDNA project: the Mammalian Gene Collection (MGC).</title>
        <authorList>
            <consortium name="The MGC Project Team"/>
        </authorList>
    </citation>
    <scope>NUCLEOTIDE SEQUENCE [LARGE SCALE MRNA] (ISOFORMS 2 AND 3)</scope>
    <source>
        <tissue>Fetal brain</tissue>
    </source>
</reference>
<reference key="11">
    <citation type="journal article" date="2001" name="J. Immunol.">
        <title>Interaction properties of human mannan-binding lectin (MBL)-associated serine proteases-1 and -2, MBL-associated protein 19, and MBL.</title>
        <authorList>
            <person name="Thielens N.M."/>
            <person name="Cseh S."/>
            <person name="Thiel S."/>
            <person name="Vorup-Jensen T."/>
            <person name="Rossi V."/>
            <person name="Jensenius J.C."/>
            <person name="Arlaud G.J."/>
        </authorList>
    </citation>
    <scope>PROTEIN SEQUENCE OF 20-29 AND 449-458</scope>
    <scope>SIGNAL SEQUENCE CLEAVAGE SITE</scope>
    <scope>AUTOCATALYTIC CLEAVAGE AT ARG-448</scope>
    <scope>GLYCOSYLATION</scope>
    <scope>HOMODIMERIZATION</scope>
    <scope>INTERACTION WITH MBL2</scope>
</reference>
<reference key="12">
    <citation type="journal article" date="1997" name="Clin. Exp. Immunol.">
        <title>Human serum mannose-binding lectin (MBL)-associated serine protease-1 (MASP-1): determination of levels in body fluids and identification of two forms in serum.</title>
        <authorList>
            <person name="Terai I."/>
            <person name="Kobayashi K."/>
            <person name="Matsushita M."/>
            <person name="Fujita T."/>
        </authorList>
    </citation>
    <scope>TISSUE SPECIFICITY</scope>
</reference>
<reference key="13">
    <citation type="journal article" date="1997" name="Nature">
        <title>A second serine protease associated with mannan-binding lectin that activates complement.</title>
        <authorList>
            <person name="Thiel S."/>
            <person name="Vorup-Jensen T."/>
            <person name="Stover C.M."/>
            <person name="Schwaeble W.J."/>
            <person name="Laursen S.B."/>
            <person name="Poulsen K."/>
            <person name="Willis A.C."/>
            <person name="Eggleton P."/>
            <person name="Hansen S."/>
            <person name="Holmskov U."/>
            <person name="Reid K.B.M."/>
            <person name="Jensenius J.C."/>
        </authorList>
    </citation>
    <scope>INTERACTION WITH MBL2</scope>
    <source>
        <tissue>Liver</tissue>
    </source>
</reference>
<reference key="14">
    <citation type="journal article" date="2000" name="J. Immunol.">
        <title>Complement-activating complex of ficolin and mannose-binding lectin-associated serine protease.</title>
        <authorList>
            <person name="Matsushita M."/>
            <person name="Endo Y."/>
            <person name="Fujita T."/>
        </authorList>
    </citation>
    <scope>INTERACTION WITH FCN2</scope>
</reference>
<reference key="15">
    <citation type="journal article" date="2000" name="J. Immunol.">
        <title>Interaction of C1q and mannan-binding lectin (MBL) with C1r, C1s, MBL-associated serine proteases 1 and 2, and the MBL-associated protein MAp19.</title>
        <authorList>
            <person name="Thiel S."/>
            <person name="Petersen S.V."/>
            <person name="Vorup-Jensen T."/>
            <person name="Matsushita M."/>
            <person name="Fujita T."/>
            <person name="Stover C.M."/>
            <person name="Schwaeble W.J."/>
            <person name="Jensenius J.C."/>
        </authorList>
    </citation>
    <scope>INTERACTION WITH MBL2</scope>
</reference>
<reference key="16">
    <citation type="journal article" date="2000" name="J. Immunol.">
        <title>Proteolytic activities of two types of mannose-binding lectin-associated serine protease.</title>
        <authorList>
            <person name="Matsushita M."/>
            <person name="Thiel S."/>
            <person name="Jensenius J.C."/>
            <person name="Terai I."/>
            <person name="Fujita T."/>
        </authorList>
    </citation>
    <scope>CATALYTIC ACTIVITY</scope>
    <scope>INTERACTION WITH SERPING1</scope>
</reference>
<reference key="17">
    <citation type="journal article" date="2001" name="J. Biol. Chem.">
        <title>Substrate specificities of recombinant mannan-binding lectin-associated serine proteases-1 and -2.</title>
        <authorList>
            <person name="Rossi V."/>
            <person name="Cseh S."/>
            <person name="Bally I."/>
            <person name="Thielens N.M."/>
            <person name="Jensenius J.C."/>
            <person name="Arlaud G.J."/>
        </authorList>
    </citation>
    <scope>CATALYTIC ACTIVITY</scope>
    <scope>BIOPHYSICOCHEMICAL PROPERTIES</scope>
    <scope>ACTIVITY REGULATION</scope>
</reference>
<reference key="18">
    <citation type="journal article" date="2002" name="J. Immunol.">
        <title>Activation of the lectin complement pathway by H-ficolin (Hakata antigen).</title>
        <authorList>
            <person name="Matsushita M."/>
            <person name="Kuraya M."/>
            <person name="Hamasaki N."/>
            <person name="Tsujimura M."/>
            <person name="Shiraki H."/>
            <person name="Fujita T."/>
        </authorList>
    </citation>
    <scope>INTERACTION WITH FCN3</scope>
</reference>
<reference key="19">
    <citation type="journal article" date="2002" name="J. Immunol.">
        <title>Characterization of the interaction between L-ficolin/p35 and mannan-binding lectin-associated serine proteases-1 and -2.</title>
        <authorList>
            <person name="Cseh S."/>
            <person name="Vera L."/>
            <person name="Matsushita M."/>
            <person name="Fujita T."/>
            <person name="Arlaud G.J."/>
            <person name="Thielens N.M."/>
        </authorList>
    </citation>
    <scope>INTERACTION WITH FCN2</scope>
</reference>
<reference key="20">
    <citation type="journal article" date="2003" name="J. Immunol.">
        <title>Natural substrates and inhibitors of mannan-binding lectin-associated serine protease-1 and -2: a study on recombinant catalytic fragments.</title>
        <authorList>
            <person name="Ambrus G."/>
            <person name="Gal P."/>
            <person name="Kojima M."/>
            <person name="Szilagyi K."/>
            <person name="Balczer J."/>
            <person name="Antal J."/>
            <person name="Graf L."/>
            <person name="Laich A."/>
            <person name="Moffatt B.E."/>
            <person name="Schwaeble W."/>
            <person name="Sim R.B."/>
            <person name="Zavodszky P."/>
        </authorList>
    </citation>
    <scope>ACTIVITY REGULATION</scope>
    <scope>BIOPHYSICOCHEMICAL PROPERTIES</scope>
</reference>
<reference key="21">
    <citation type="journal article" date="2004" name="J. Immunol.">
        <title>Characterization of recombinant mannan-binding lectin-associated serine protease (MASP)-3 suggests an activation mechanism different from that of MASP-1 and MASP-2.</title>
        <authorList>
            <person name="Zundel S."/>
            <person name="Cseh S."/>
            <person name="Lacroix M."/>
            <person name="Dahl M.R."/>
            <person name="Matsushita M."/>
            <person name="Andrieu J.-P."/>
            <person name="Schwaeble W.J."/>
            <person name="Jensenius J.C."/>
            <person name="Fujita T."/>
            <person name="Arlaud G.J."/>
            <person name="Thielens N.M."/>
        </authorList>
    </citation>
    <scope>CHARACTERIZATION (ISOFORM 2)</scope>
    <scope>MUTAGENESIS OF SER-646</scope>
    <scope>AUTOCATALYTIC CLEAVAGE</scope>
</reference>
<reference key="22">
    <citation type="journal article" date="2005" name="J. Proteome Res.">
        <title>Human plasma N-glycoproteome analysis by immunoaffinity subtraction, hydrazide chemistry, and mass spectrometry.</title>
        <authorList>
            <person name="Liu T."/>
            <person name="Qian W.-J."/>
            <person name="Gritsenko M.A."/>
            <person name="Camp D.G. II"/>
            <person name="Monroe M.E."/>
            <person name="Moore R.J."/>
            <person name="Smith R.D."/>
        </authorList>
    </citation>
    <scope>GLYCOSYLATION [LARGE SCALE ANALYSIS] AT ASN-49; ASN-178; ASN-385 AND ASN-407</scope>
    <scope>GLYCOSYLATION [LARGE SCALE ANALYSIS] AT ASN-533 AND ASN-599 (ISOFORM 2)</scope>
    <source>
        <tissue>Plasma</tissue>
    </source>
</reference>
<reference key="23">
    <citation type="journal article" date="2006" name="Arch. Biochem. Biophys.">
        <title>Mannan-binding lectin-associated serine protease 3 cleaves synthetic peptides and insulin-like growth factor-binding protein 5.</title>
        <authorList>
            <person name="Cortesio C.L."/>
            <person name="Jiang W."/>
        </authorList>
    </citation>
    <scope>CATALYTIC ACTIVITY (ISOFORM 2)</scope>
</reference>
<reference key="24">
    <citation type="journal article" date="2007" name="Int. Immunol.">
        <title>Cooperation between MASP-1 and MASP-2 in the generation of C3 convertase through the MBL pathway.</title>
        <authorList>
            <person name="Moeller-Kristensen M."/>
            <person name="Thiel S."/>
            <person name="Sjoeholm A."/>
            <person name="Matsushita M."/>
            <person name="Jensenius J.C."/>
        </authorList>
    </citation>
    <scope>FUNCTION (ISOFORMS 1 AND 2)</scope>
</reference>
<reference key="25">
    <citation type="journal article" date="2009" name="Mol. Cell. Proteomics">
        <title>A strategy for precise and large scale identification of core fucosylated glycoproteins.</title>
        <authorList>
            <person name="Jia W."/>
            <person name="Lu Z."/>
            <person name="Fu Y."/>
            <person name="Wang H.P."/>
            <person name="Wang L.H."/>
            <person name="Chi H."/>
            <person name="Yuan Z.F."/>
            <person name="Zheng Z.B."/>
            <person name="Song L.N."/>
            <person name="Han H.H."/>
            <person name="Liang Y.M."/>
            <person name="Wang J.L."/>
            <person name="Cai Y."/>
            <person name="Zhang Y.K."/>
            <person name="Deng Y.L."/>
            <person name="Ying W.T."/>
            <person name="He S.M."/>
            <person name="Qian X.H."/>
        </authorList>
    </citation>
    <scope>GLYCOSYLATION AT ASN-178 AND ASN-385</scope>
</reference>
<reference key="26">
    <citation type="journal article" date="2010" name="J. Immunol.">
        <title>Collectin 11 (CL-11, CL-K1) is a MASP-1/3-associated plasma collectin with microbial-binding activity.</title>
        <authorList>
            <person name="Hansen S."/>
            <person name="Selman L."/>
            <person name="Palaniyar N."/>
            <person name="Ziegler K."/>
            <person name="Brandt J."/>
            <person name="Kliem A."/>
            <person name="Jonasson M."/>
            <person name="Skjoedt M.O."/>
            <person name="Nielsen O."/>
            <person name="Hartshorn K."/>
            <person name="Joergensen T.J."/>
            <person name="Skjoedt K."/>
            <person name="Holmskov U."/>
        </authorList>
    </citation>
    <scope>INTERACTION WITH COLEC11</scope>
</reference>
<reference key="27">
    <citation type="journal article" date="2008" name="J. Biol. Chem.">
        <title>Crystal structure of the CUB1-EGF-CUB2 domain of human MASP-1/3 and identification of its interaction sites with mannan-binding lectin and ficolins.</title>
        <authorList>
            <person name="Teillet F."/>
            <person name="Gaboriaud C."/>
            <person name="Lacroix M."/>
            <person name="Martin L."/>
            <person name="Arlaud G.J."/>
            <person name="Thielens N.M."/>
        </authorList>
    </citation>
    <scope>X-RAY CRYSTALLOGRAPHY (2.3 ANGSTROMS) OF 20-295 IN COMPLEX WITH CALCIUM IONS</scope>
    <scope>HOMODIMERIZATION</scope>
    <scope>GLYCOSYLATION AT ASN-178</scope>
    <scope>DISULFIDE BONDS</scope>
    <scope>CALCIUM-BINDING SITES</scope>
    <scope>INTERACTION WITH FCN2; FCN3 AND MBL2</scope>
    <scope>MUTAGENESIS OF GLU-68; TYR-77; GLU-99; ASP-121; PHE-122; SER-123; GLU-125; HIS-237; GLU-239; TYR-244; GLU-262; SER-274; ASN-283 AND GLU-286</scope>
</reference>
<reference key="28">
    <citation type="journal article" date="2011" name="Nat. Genet.">
        <title>Mutations in lectin complement pathway genes COLEC11 and MASP1 cause 3MC syndrome.</title>
        <authorList>
            <person name="Rooryck C."/>
            <person name="Diaz-Font A."/>
            <person name="Osborn D.P."/>
            <person name="Chabchoub E."/>
            <person name="Hernandez-Hernandez V."/>
            <person name="Shamseldin H."/>
            <person name="Kenny J."/>
            <person name="Waters A."/>
            <person name="Jenkins D."/>
            <person name="Kaissi A.A."/>
            <person name="Leal G.F."/>
            <person name="Dallapiccola B."/>
            <person name="Carnevale F."/>
            <person name="Bitner-Glindzicz M."/>
            <person name="Lees M."/>
            <person name="Hennekam R."/>
            <person name="Stanier P."/>
            <person name="Burns A.J."/>
            <person name="Peeters H."/>
            <person name="Alkuraya F.S."/>
            <person name="Beales P.L."/>
        </authorList>
    </citation>
    <scope>VARIANTS 3MC1 TYR-497; ARG-630 AND GLU-666 (ISOFORM 2)</scope>
    <scope>INVOLVEMENT IN 3MC1</scope>
    <scope>FUNCTION</scope>
</reference>
<reference key="29">
    <citation type="journal article" date="2015" name="Orphanet J. Rare Dis.">
        <title>Novel MASP1 mutations are associated with an expanded phenotype in 3MC1 syndrome.</title>
        <authorList>
            <person name="Atik T."/>
            <person name="Koparir A."/>
            <person name="Bademci G."/>
            <person name="Foster J. II"/>
            <person name="Altunoglu U."/>
            <person name="Mutlu G.Y."/>
            <person name="Bowdin S."/>
            <person name="Elcioglu N."/>
            <person name="Tayfun G.A."/>
            <person name="Atik S.S."/>
            <person name="Ozen M."/>
            <person name="Ozkinay F."/>
            <person name="Alanay Y."/>
            <person name="Kayserili H."/>
            <person name="Thiel S."/>
            <person name="Tekin M."/>
        </authorList>
    </citation>
    <scope>VARIANTS 3MC1 GLU-484; ASN-553 AND TYR-663 (ISOFORM 2)</scope>
</reference>
<reference key="30">
    <citation type="journal article" date="2017" name="PLoS Genet.">
        <title>COLEC10 is mutated in 3MC patients and regulates early craniofacial development.</title>
        <authorList>
            <person name="Munye M.M."/>
            <person name="Diaz-Font A."/>
            <person name="Ocaka L."/>
            <person name="Henriksen M.L."/>
            <person name="Lees M."/>
            <person name="Brady A."/>
            <person name="Jenkins D."/>
            <person name="Morton J."/>
            <person name="Hansen S.W."/>
            <person name="Bacchelli C."/>
            <person name="Beales P.L."/>
            <person name="Hernandez-Hernandez V."/>
        </authorList>
    </citation>
    <scope>VARIANT 3MC1 3-TRP--ASN-699 DEL</scope>
</reference>
<gene>
    <name type="primary">MASP1</name>
    <name type="synonym">CRARF</name>
    <name type="synonym">CRARF1</name>
    <name type="synonym">PRSS5</name>
</gene>
<organism>
    <name type="scientific">Homo sapiens</name>
    <name type="common">Human</name>
    <dbReference type="NCBI Taxonomy" id="9606"/>
    <lineage>
        <taxon>Eukaryota</taxon>
        <taxon>Metazoa</taxon>
        <taxon>Chordata</taxon>
        <taxon>Craniata</taxon>
        <taxon>Vertebrata</taxon>
        <taxon>Euteleostomi</taxon>
        <taxon>Mammalia</taxon>
        <taxon>Eutheria</taxon>
        <taxon>Euarchontoglires</taxon>
        <taxon>Primates</taxon>
        <taxon>Haplorrhini</taxon>
        <taxon>Catarrhini</taxon>
        <taxon>Hominidae</taxon>
        <taxon>Homo</taxon>
    </lineage>
</organism>